<evidence type="ECO:0000250" key="1">
    <source>
        <dbReference type="UniProtKB" id="P79208"/>
    </source>
</evidence>
<evidence type="ECO:0000250" key="2">
    <source>
        <dbReference type="UniProtKB" id="Q05769"/>
    </source>
</evidence>
<evidence type="ECO:0000255" key="3"/>
<evidence type="ECO:0000255" key="4">
    <source>
        <dbReference type="PROSITE-ProRule" id="PRU00076"/>
    </source>
</evidence>
<evidence type="ECO:0000255" key="5">
    <source>
        <dbReference type="PROSITE-ProRule" id="PRU00298"/>
    </source>
</evidence>
<evidence type="ECO:0000269" key="6">
    <source>
    </source>
</evidence>
<evidence type="ECO:0000269" key="7">
    <source>
    </source>
</evidence>
<evidence type="ECO:0000269" key="8">
    <source>
    </source>
</evidence>
<evidence type="ECO:0000269" key="9">
    <source>
    </source>
</evidence>
<evidence type="ECO:0000269" key="10">
    <source>
    </source>
</evidence>
<evidence type="ECO:0000269" key="11">
    <source>
    </source>
</evidence>
<evidence type="ECO:0000269" key="12">
    <source>
    </source>
</evidence>
<evidence type="ECO:0000269" key="13">
    <source>
    </source>
</evidence>
<evidence type="ECO:0000269" key="14">
    <source>
    </source>
</evidence>
<evidence type="ECO:0000269" key="15">
    <source>
    </source>
</evidence>
<evidence type="ECO:0000269" key="16">
    <source>
    </source>
</evidence>
<evidence type="ECO:0000269" key="17">
    <source>
    </source>
</evidence>
<evidence type="ECO:0000269" key="18">
    <source>
    </source>
</evidence>
<evidence type="ECO:0000269" key="19">
    <source>
    </source>
</evidence>
<evidence type="ECO:0000269" key="20">
    <source>
    </source>
</evidence>
<evidence type="ECO:0000269" key="21">
    <source>
    </source>
</evidence>
<evidence type="ECO:0000269" key="22">
    <source>
    </source>
</evidence>
<evidence type="ECO:0000269" key="23">
    <source>
    </source>
</evidence>
<evidence type="ECO:0000269" key="24">
    <source>
    </source>
</evidence>
<evidence type="ECO:0000269" key="25">
    <source>
    </source>
</evidence>
<evidence type="ECO:0000269" key="26">
    <source>
    </source>
</evidence>
<evidence type="ECO:0000269" key="27">
    <source ref="6"/>
</evidence>
<evidence type="ECO:0000303" key="28">
    <source>
    </source>
</evidence>
<evidence type="ECO:0000303" key="29">
    <source>
    </source>
</evidence>
<evidence type="ECO:0000305" key="30"/>
<evidence type="ECO:0000305" key="31">
    <source>
    </source>
</evidence>
<evidence type="ECO:0000305" key="32">
    <source>
    </source>
</evidence>
<evidence type="ECO:0000305" key="33">
    <source>
    </source>
</evidence>
<evidence type="ECO:0000305" key="34">
    <source>
    </source>
</evidence>
<evidence type="ECO:0000305" key="35">
    <source>
    </source>
</evidence>
<evidence type="ECO:0000305" key="36">
    <source>
    </source>
</evidence>
<evidence type="ECO:0000305" key="37">
    <source>
    </source>
</evidence>
<evidence type="ECO:0000305" key="38">
    <source>
    </source>
</evidence>
<evidence type="ECO:0000305" key="39">
    <source>
    </source>
</evidence>
<evidence type="ECO:0000305" key="40">
    <source>
    </source>
</evidence>
<evidence type="ECO:0000305" key="41">
    <source>
    </source>
</evidence>
<evidence type="ECO:0000305" key="42">
    <source>
    </source>
</evidence>
<evidence type="ECO:0000305" key="43">
    <source>
    </source>
</evidence>
<evidence type="ECO:0000305" key="44">
    <source>
    </source>
</evidence>
<evidence type="ECO:0000305" key="45">
    <source>
    </source>
</evidence>
<evidence type="ECO:0000305" key="46">
    <source>
    </source>
</evidence>
<evidence type="ECO:0000305" key="47">
    <source>
    </source>
</evidence>
<evidence type="ECO:0000312" key="48">
    <source>
        <dbReference type="HGNC" id="HGNC:9605"/>
    </source>
</evidence>
<evidence type="ECO:0007744" key="49">
    <source>
        <dbReference type="PDB" id="5F19"/>
    </source>
</evidence>
<evidence type="ECO:0007744" key="50">
    <source>
        <dbReference type="PDB" id="5F1A"/>
    </source>
</evidence>
<evidence type="ECO:0007744" key="51">
    <source>
        <dbReference type="PDB" id="5IKQ"/>
    </source>
</evidence>
<evidence type="ECO:0007744" key="52">
    <source>
        <dbReference type="PDB" id="5IKR"/>
    </source>
</evidence>
<evidence type="ECO:0007744" key="53">
    <source>
        <dbReference type="PDB" id="5IKT"/>
    </source>
</evidence>
<evidence type="ECO:0007744" key="54">
    <source>
        <dbReference type="PDB" id="5IKV"/>
    </source>
</evidence>
<evidence type="ECO:0007744" key="55">
    <source>
        <dbReference type="PDB" id="5KIR"/>
    </source>
</evidence>
<evidence type="ECO:0007829" key="56">
    <source>
        <dbReference type="PDB" id="5F19"/>
    </source>
</evidence>
<keyword id="KW-0002">3D-structure</keyword>
<keyword id="KW-0007">Acetylation</keyword>
<keyword id="KW-0223">Dioxygenase</keyword>
<keyword id="KW-1015">Disulfide bond</keyword>
<keyword id="KW-0256">Endoplasmic reticulum</keyword>
<keyword id="KW-0275">Fatty acid biosynthesis</keyword>
<keyword id="KW-0276">Fatty acid metabolism</keyword>
<keyword id="KW-0325">Glycoprotein</keyword>
<keyword id="KW-0349">Heme</keyword>
<keyword id="KW-0408">Iron</keyword>
<keyword id="KW-0444">Lipid biosynthesis</keyword>
<keyword id="KW-0443">Lipid metabolism</keyword>
<keyword id="KW-0472">Membrane</keyword>
<keyword id="KW-0479">Metal-binding</keyword>
<keyword id="KW-0492">Microsome</keyword>
<keyword id="KW-0539">Nucleus</keyword>
<keyword id="KW-0560">Oxidoreductase</keyword>
<keyword id="KW-0575">Peroxidase</keyword>
<keyword id="KW-0643">Prostaglandin biosynthesis</keyword>
<keyword id="KW-0644">Prostaglandin metabolism</keyword>
<keyword id="KW-1267">Proteomics identification</keyword>
<keyword id="KW-1185">Reference proteome</keyword>
<keyword id="KW-0702">S-nitrosylation</keyword>
<keyword id="KW-0732">Signal</keyword>
<gene>
    <name evidence="48" type="primary">PTGS2</name>
    <name evidence="28" type="synonym">COX2</name>
</gene>
<sequence>MLARALLLCAVLALSHTANPCCSHPCQNRGVCMSVGFDQYKCDCTRTGFYGENCSTPEFLTRIKLFLKPTPNTVHYILTHFKGFWNVVNNIPFLRNAIMSYVLTSRSHLIDSPPTYNADYGYKSWEAFSNLSYYTRALPPVPDDCPTPLGVKGKKQLPDSNEIVEKLLLRRKFIPDPQGSNMMFAFFAQHFTHQFFKTDHKRGPAFTNGLGHGVDLNHIYGETLARQRKLRLFKDGKMKYQIIDGEMYPPTVKDTQAEMIYPPQVPEHLRFAVGQEVFGLVPGLMMYATIWLREHNRVCDVLKQEHPEWGDEQLFQTSRLILIGETIKIVIEDYVQHLSGYHFKLKFDPELLFNKQFQYQNRIAAEFNTLYHWHPLLPDTFQIHDQKYNYQQFIYNNSILLEHGITQFVESFTRQIAGRVAGGRNVPPAVQKVSQASIDQSRQMKYQSFNEYRKRFMLKPYESFEELTGEKEMSAELEALYGDIDAVELYPALLVEKPRPDAIFGETMVEVGAPFSLKGLMGNVICSPAYWKPSTFGGEVGFQIINTASIQSLICNNVKGCPFTSFSVPDPELIKTVTINASSSRSGLDDINPTVLLKERSTEL</sequence>
<name>PGH2_HUMAN</name>
<organism>
    <name type="scientific">Homo sapiens</name>
    <name type="common">Human</name>
    <dbReference type="NCBI Taxonomy" id="9606"/>
    <lineage>
        <taxon>Eukaryota</taxon>
        <taxon>Metazoa</taxon>
        <taxon>Chordata</taxon>
        <taxon>Craniata</taxon>
        <taxon>Vertebrata</taxon>
        <taxon>Euteleostomi</taxon>
        <taxon>Mammalia</taxon>
        <taxon>Eutheria</taxon>
        <taxon>Euarchontoglires</taxon>
        <taxon>Primates</taxon>
        <taxon>Haplorrhini</taxon>
        <taxon>Catarrhini</taxon>
        <taxon>Hominidae</taxon>
        <taxon>Homo</taxon>
    </lineage>
</organism>
<proteinExistence type="evidence at protein level"/>
<reference key="1">
    <citation type="journal article" date="1993" name="J. Biol. Chem.">
        <title>Molecular cloning of human prostaglandin endoperoxide synthase type II and demonstration of expression in response to cytokines.</title>
        <authorList>
            <person name="Jones D.A."/>
            <person name="Carlton D.P."/>
            <person name="McIntyre T.M."/>
            <person name="Zimmerman G.A."/>
            <person name="Prescott S.M."/>
        </authorList>
    </citation>
    <scope>NUCLEOTIDE SEQUENCE [MRNA]</scope>
    <source>
        <tissue>Endothelial cell</tissue>
    </source>
</reference>
<reference key="2">
    <citation type="journal article" date="1992" name="Proc. Natl. Acad. Sci. U.S.A.">
        <title>Human cyclooxygenase-2 cDNA.</title>
        <authorList>
            <person name="Hla T."/>
            <person name="Neilson K."/>
        </authorList>
    </citation>
    <scope>NUCLEOTIDE SEQUENCE [MRNA]</scope>
    <source>
        <tissue>Endothelial cell</tissue>
    </source>
</reference>
<reference key="3">
    <citation type="journal article" date="1994" name="Eur. J. Biochem.">
        <title>Characterization of the human gene (PTGS2) encoding prostaglandin-endoperoxide synthase 2.</title>
        <authorList>
            <person name="Kosaka T."/>
            <person name="Miyata A."/>
            <person name="Ihara H."/>
            <person name="Hara S."/>
            <person name="Sugimoto T."/>
            <person name="Takeda O."/>
            <person name="Takahashi E."/>
            <person name="Tanabe T."/>
        </authorList>
    </citation>
    <scope>NUCLEOTIDE SEQUENCE [GENOMIC DNA]</scope>
    <source>
        <tissue>Peripheral blood</tissue>
    </source>
</reference>
<reference key="4">
    <citation type="journal article" date="1994" name="Biochem. J.">
        <title>Structure of the human cyclo-oxygenase-2 gene.</title>
        <authorList>
            <person name="Appleby S.B."/>
            <person name="Ristimaki A."/>
            <person name="Neilson K."/>
            <person name="Narko K."/>
            <person name="Hla T."/>
        </authorList>
    </citation>
    <scope>NUCLEOTIDE SEQUENCE [GENOMIC DNA]</scope>
    <source>
        <tissue>Placenta</tissue>
    </source>
</reference>
<reference key="5">
    <citation type="submission" date="2003-11" db="EMBL/GenBank/DDBJ databases">
        <title>cDNA clones of human proteins involved in signal transduction sequenced by the Guthrie cDNA resource center (www.cdna.org).</title>
        <authorList>
            <person name="Sharma S.V."/>
            <person name="Aronstam R.S."/>
        </authorList>
    </citation>
    <scope>NUCLEOTIDE SEQUENCE [LARGE SCALE MRNA]</scope>
    <source>
        <tissue>Placenta</tissue>
    </source>
</reference>
<reference key="6">
    <citation type="submission" date="2003-02" db="EMBL/GenBank/DDBJ databases">
        <authorList>
            <consortium name="NIEHS SNPs program"/>
        </authorList>
    </citation>
    <scope>NUCLEOTIDE SEQUENCE [GENOMIC DNA]</scope>
    <scope>VARIANTS HIS-228; ALA-428; ALA-511 AND ARG-587</scope>
</reference>
<reference key="7">
    <citation type="submission" date="2003-09" db="EMBL/GenBank/DDBJ databases">
        <authorList>
            <consortium name="SeattleSNPs variation discovery resource"/>
        </authorList>
    </citation>
    <scope>NUCLEOTIDE SEQUENCE [GENOMIC DNA]</scope>
</reference>
<reference key="8">
    <citation type="journal article" date="2004" name="Nat. Genet.">
        <title>Complete sequencing and characterization of 21,243 full-length human cDNAs.</title>
        <authorList>
            <person name="Ota T."/>
            <person name="Suzuki Y."/>
            <person name="Nishikawa T."/>
            <person name="Otsuki T."/>
            <person name="Sugiyama T."/>
            <person name="Irie R."/>
            <person name="Wakamatsu A."/>
            <person name="Hayashi K."/>
            <person name="Sato H."/>
            <person name="Nagai K."/>
            <person name="Kimura K."/>
            <person name="Makita H."/>
            <person name="Sekine M."/>
            <person name="Obayashi M."/>
            <person name="Nishi T."/>
            <person name="Shibahara T."/>
            <person name="Tanaka T."/>
            <person name="Ishii S."/>
            <person name="Yamamoto J."/>
            <person name="Saito K."/>
            <person name="Kawai Y."/>
            <person name="Isono Y."/>
            <person name="Nakamura Y."/>
            <person name="Nagahari K."/>
            <person name="Murakami K."/>
            <person name="Yasuda T."/>
            <person name="Iwayanagi T."/>
            <person name="Wagatsuma M."/>
            <person name="Shiratori A."/>
            <person name="Sudo H."/>
            <person name="Hosoiri T."/>
            <person name="Kaku Y."/>
            <person name="Kodaira H."/>
            <person name="Kondo H."/>
            <person name="Sugawara M."/>
            <person name="Takahashi M."/>
            <person name="Kanda K."/>
            <person name="Yokoi T."/>
            <person name="Furuya T."/>
            <person name="Kikkawa E."/>
            <person name="Omura Y."/>
            <person name="Abe K."/>
            <person name="Kamihara K."/>
            <person name="Katsuta N."/>
            <person name="Sato K."/>
            <person name="Tanikawa M."/>
            <person name="Yamazaki M."/>
            <person name="Ninomiya K."/>
            <person name="Ishibashi T."/>
            <person name="Yamashita H."/>
            <person name="Murakawa K."/>
            <person name="Fujimori K."/>
            <person name="Tanai H."/>
            <person name="Kimata M."/>
            <person name="Watanabe M."/>
            <person name="Hiraoka S."/>
            <person name="Chiba Y."/>
            <person name="Ishida S."/>
            <person name="Ono Y."/>
            <person name="Takiguchi S."/>
            <person name="Watanabe S."/>
            <person name="Yosida M."/>
            <person name="Hotuta T."/>
            <person name="Kusano J."/>
            <person name="Kanehori K."/>
            <person name="Takahashi-Fujii A."/>
            <person name="Hara H."/>
            <person name="Tanase T.-O."/>
            <person name="Nomura Y."/>
            <person name="Togiya S."/>
            <person name="Komai F."/>
            <person name="Hara R."/>
            <person name="Takeuchi K."/>
            <person name="Arita M."/>
            <person name="Imose N."/>
            <person name="Musashino K."/>
            <person name="Yuuki H."/>
            <person name="Oshima A."/>
            <person name="Sasaki N."/>
            <person name="Aotsuka S."/>
            <person name="Yoshikawa Y."/>
            <person name="Matsunawa H."/>
            <person name="Ichihara T."/>
            <person name="Shiohata N."/>
            <person name="Sano S."/>
            <person name="Moriya S."/>
            <person name="Momiyama H."/>
            <person name="Satoh N."/>
            <person name="Takami S."/>
            <person name="Terashima Y."/>
            <person name="Suzuki O."/>
            <person name="Nakagawa S."/>
            <person name="Senoh A."/>
            <person name="Mizoguchi H."/>
            <person name="Goto Y."/>
            <person name="Shimizu F."/>
            <person name="Wakebe H."/>
            <person name="Hishigaki H."/>
            <person name="Watanabe T."/>
            <person name="Sugiyama A."/>
            <person name="Takemoto M."/>
            <person name="Kawakami B."/>
            <person name="Yamazaki M."/>
            <person name="Watanabe K."/>
            <person name="Kumagai A."/>
            <person name="Itakura S."/>
            <person name="Fukuzumi Y."/>
            <person name="Fujimori Y."/>
            <person name="Komiyama M."/>
            <person name="Tashiro H."/>
            <person name="Tanigami A."/>
            <person name="Fujiwara T."/>
            <person name="Ono T."/>
            <person name="Yamada K."/>
            <person name="Fujii Y."/>
            <person name="Ozaki K."/>
            <person name="Hirao M."/>
            <person name="Ohmori Y."/>
            <person name="Kawabata A."/>
            <person name="Hikiji T."/>
            <person name="Kobatake N."/>
            <person name="Inagaki H."/>
            <person name="Ikema Y."/>
            <person name="Okamoto S."/>
            <person name="Okitani R."/>
            <person name="Kawakami T."/>
            <person name="Noguchi S."/>
            <person name="Itoh T."/>
            <person name="Shigeta K."/>
            <person name="Senba T."/>
            <person name="Matsumura K."/>
            <person name="Nakajima Y."/>
            <person name="Mizuno T."/>
            <person name="Morinaga M."/>
            <person name="Sasaki M."/>
            <person name="Togashi T."/>
            <person name="Oyama M."/>
            <person name="Hata H."/>
            <person name="Watanabe M."/>
            <person name="Komatsu T."/>
            <person name="Mizushima-Sugano J."/>
            <person name="Satoh T."/>
            <person name="Shirai Y."/>
            <person name="Takahashi Y."/>
            <person name="Nakagawa K."/>
            <person name="Okumura K."/>
            <person name="Nagase T."/>
            <person name="Nomura N."/>
            <person name="Kikuchi H."/>
            <person name="Masuho Y."/>
            <person name="Yamashita R."/>
            <person name="Nakai K."/>
            <person name="Yada T."/>
            <person name="Nakamura Y."/>
            <person name="Ohara O."/>
            <person name="Isogai T."/>
            <person name="Sugano S."/>
        </authorList>
    </citation>
    <scope>NUCLEOTIDE SEQUENCE [LARGE SCALE MRNA]</scope>
    <source>
        <tissue>Synovium</tissue>
    </source>
</reference>
<reference key="9">
    <citation type="journal article" date="2006" name="Nature">
        <title>The DNA sequence and biological annotation of human chromosome 1.</title>
        <authorList>
            <person name="Gregory S.G."/>
            <person name="Barlow K.F."/>
            <person name="McLay K.E."/>
            <person name="Kaul R."/>
            <person name="Swarbreck D."/>
            <person name="Dunham A."/>
            <person name="Scott C.E."/>
            <person name="Howe K.L."/>
            <person name="Woodfine K."/>
            <person name="Spencer C.C.A."/>
            <person name="Jones M.C."/>
            <person name="Gillson C."/>
            <person name="Searle S."/>
            <person name="Zhou Y."/>
            <person name="Kokocinski F."/>
            <person name="McDonald L."/>
            <person name="Evans R."/>
            <person name="Phillips K."/>
            <person name="Atkinson A."/>
            <person name="Cooper R."/>
            <person name="Jones C."/>
            <person name="Hall R.E."/>
            <person name="Andrews T.D."/>
            <person name="Lloyd C."/>
            <person name="Ainscough R."/>
            <person name="Almeida J.P."/>
            <person name="Ambrose K.D."/>
            <person name="Anderson F."/>
            <person name="Andrew R.W."/>
            <person name="Ashwell R.I.S."/>
            <person name="Aubin K."/>
            <person name="Babbage A.K."/>
            <person name="Bagguley C.L."/>
            <person name="Bailey J."/>
            <person name="Beasley H."/>
            <person name="Bethel G."/>
            <person name="Bird C.P."/>
            <person name="Bray-Allen S."/>
            <person name="Brown J.Y."/>
            <person name="Brown A.J."/>
            <person name="Buckley D."/>
            <person name="Burton J."/>
            <person name="Bye J."/>
            <person name="Carder C."/>
            <person name="Chapman J.C."/>
            <person name="Clark S.Y."/>
            <person name="Clarke G."/>
            <person name="Clee C."/>
            <person name="Cobley V."/>
            <person name="Collier R.E."/>
            <person name="Corby N."/>
            <person name="Coville G.J."/>
            <person name="Davies J."/>
            <person name="Deadman R."/>
            <person name="Dunn M."/>
            <person name="Earthrowl M."/>
            <person name="Ellington A.G."/>
            <person name="Errington H."/>
            <person name="Frankish A."/>
            <person name="Frankland J."/>
            <person name="French L."/>
            <person name="Garner P."/>
            <person name="Garnett J."/>
            <person name="Gay L."/>
            <person name="Ghori M.R.J."/>
            <person name="Gibson R."/>
            <person name="Gilby L.M."/>
            <person name="Gillett W."/>
            <person name="Glithero R.J."/>
            <person name="Grafham D.V."/>
            <person name="Griffiths C."/>
            <person name="Griffiths-Jones S."/>
            <person name="Grocock R."/>
            <person name="Hammond S."/>
            <person name="Harrison E.S.I."/>
            <person name="Hart E."/>
            <person name="Haugen E."/>
            <person name="Heath P.D."/>
            <person name="Holmes S."/>
            <person name="Holt K."/>
            <person name="Howden P.J."/>
            <person name="Hunt A.R."/>
            <person name="Hunt S.E."/>
            <person name="Hunter G."/>
            <person name="Isherwood J."/>
            <person name="James R."/>
            <person name="Johnson C."/>
            <person name="Johnson D."/>
            <person name="Joy A."/>
            <person name="Kay M."/>
            <person name="Kershaw J.K."/>
            <person name="Kibukawa M."/>
            <person name="Kimberley A.M."/>
            <person name="King A."/>
            <person name="Knights A.J."/>
            <person name="Lad H."/>
            <person name="Laird G."/>
            <person name="Lawlor S."/>
            <person name="Leongamornlert D.A."/>
            <person name="Lloyd D.M."/>
            <person name="Loveland J."/>
            <person name="Lovell J."/>
            <person name="Lush M.J."/>
            <person name="Lyne R."/>
            <person name="Martin S."/>
            <person name="Mashreghi-Mohammadi M."/>
            <person name="Matthews L."/>
            <person name="Matthews N.S.W."/>
            <person name="McLaren S."/>
            <person name="Milne S."/>
            <person name="Mistry S."/>
            <person name="Moore M.J.F."/>
            <person name="Nickerson T."/>
            <person name="O'Dell C.N."/>
            <person name="Oliver K."/>
            <person name="Palmeiri A."/>
            <person name="Palmer S.A."/>
            <person name="Parker A."/>
            <person name="Patel D."/>
            <person name="Pearce A.V."/>
            <person name="Peck A.I."/>
            <person name="Pelan S."/>
            <person name="Phelps K."/>
            <person name="Phillimore B.J."/>
            <person name="Plumb R."/>
            <person name="Rajan J."/>
            <person name="Raymond C."/>
            <person name="Rouse G."/>
            <person name="Saenphimmachak C."/>
            <person name="Sehra H.K."/>
            <person name="Sheridan E."/>
            <person name="Shownkeen R."/>
            <person name="Sims S."/>
            <person name="Skuce C.D."/>
            <person name="Smith M."/>
            <person name="Steward C."/>
            <person name="Subramanian S."/>
            <person name="Sycamore N."/>
            <person name="Tracey A."/>
            <person name="Tromans A."/>
            <person name="Van Helmond Z."/>
            <person name="Wall M."/>
            <person name="Wallis J.M."/>
            <person name="White S."/>
            <person name="Whitehead S.L."/>
            <person name="Wilkinson J.E."/>
            <person name="Willey D.L."/>
            <person name="Williams H."/>
            <person name="Wilming L."/>
            <person name="Wray P.W."/>
            <person name="Wu Z."/>
            <person name="Coulson A."/>
            <person name="Vaudin M."/>
            <person name="Sulston J.E."/>
            <person name="Durbin R.M."/>
            <person name="Hubbard T."/>
            <person name="Wooster R."/>
            <person name="Dunham I."/>
            <person name="Carter N.P."/>
            <person name="McVean G."/>
            <person name="Ross M.T."/>
            <person name="Harrow J."/>
            <person name="Olson M.V."/>
            <person name="Beck S."/>
            <person name="Rogers J."/>
            <person name="Bentley D.R."/>
        </authorList>
    </citation>
    <scope>NUCLEOTIDE SEQUENCE [LARGE SCALE GENOMIC DNA]</scope>
</reference>
<reference key="10">
    <citation type="submission" date="2005-07" db="EMBL/GenBank/DDBJ databases">
        <authorList>
            <person name="Mural R.J."/>
            <person name="Istrail S."/>
            <person name="Sutton G.G."/>
            <person name="Florea L."/>
            <person name="Halpern A.L."/>
            <person name="Mobarry C.M."/>
            <person name="Lippert R."/>
            <person name="Walenz B."/>
            <person name="Shatkay H."/>
            <person name="Dew I."/>
            <person name="Miller J.R."/>
            <person name="Flanigan M.J."/>
            <person name="Edwards N.J."/>
            <person name="Bolanos R."/>
            <person name="Fasulo D."/>
            <person name="Halldorsson B.V."/>
            <person name="Hannenhalli S."/>
            <person name="Turner R."/>
            <person name="Yooseph S."/>
            <person name="Lu F."/>
            <person name="Nusskern D.R."/>
            <person name="Shue B.C."/>
            <person name="Zheng X.H."/>
            <person name="Zhong F."/>
            <person name="Delcher A.L."/>
            <person name="Huson D.H."/>
            <person name="Kravitz S.A."/>
            <person name="Mouchard L."/>
            <person name="Reinert K."/>
            <person name="Remington K.A."/>
            <person name="Clark A.G."/>
            <person name="Waterman M.S."/>
            <person name="Eichler E.E."/>
            <person name="Adams M.D."/>
            <person name="Hunkapiller M.W."/>
            <person name="Myers E.W."/>
            <person name="Venter J.C."/>
        </authorList>
    </citation>
    <scope>NUCLEOTIDE SEQUENCE [LARGE SCALE GENOMIC DNA]</scope>
</reference>
<reference key="11">
    <citation type="journal article" date="2004" name="Genome Res.">
        <title>The status, quality, and expansion of the NIH full-length cDNA project: the Mammalian Gene Collection (MGC).</title>
        <authorList>
            <consortium name="The MGC Project Team"/>
        </authorList>
    </citation>
    <scope>NUCLEOTIDE SEQUENCE [LARGE SCALE MRNA]</scope>
    <source>
        <tissue>Lung</tissue>
    </source>
</reference>
<reference key="12">
    <citation type="journal article" date="1994" name="Biochim. Biophys. Acta">
        <title>Purification, characterization and selective inhibition of human prostaglandin G/H synthase 1 and 2 expressed in the baculovirus system.</title>
        <authorList>
            <person name="Barnett J."/>
            <person name="Chow J."/>
            <person name="Ives D."/>
            <person name="Chiou M."/>
            <person name="Mackenzie R."/>
            <person name="Osen E."/>
            <person name="Nguyen B."/>
            <person name="Tsing S."/>
            <person name="Bach C."/>
            <person name="Freire J."/>
        </authorList>
    </citation>
    <scope>CHARACTERIZATION</scope>
    <scope>FUNCTION</scope>
    <scope>CATALYTIC ACTIVITY</scope>
    <scope>BIOPHYSICOCHEMICAL PROPERTIES</scope>
</reference>
<reference key="13">
    <citation type="journal article" date="1995" name="J. Biol. Chem.">
        <title>Comparison of hydroperoxide initiator requirements for the cyclooxygenase activities of prostaglandin H synthase-1 and -2.</title>
        <authorList>
            <person name="Kulmacz R.J."/>
            <person name="Wang L.H."/>
        </authorList>
    </citation>
    <scope>FUNCTION</scope>
    <scope>CATALYTIC ACTIVITY</scope>
    <scope>ACTIVITY REGULATION</scope>
</reference>
<reference key="14">
    <citation type="journal article" date="1997" name="Biochemistry">
        <title>Analysis of hydroperoxide-induced tyrosyl radicals and lipoxygenase activity in aspirin-treated human prostaglandin H synthase-2.</title>
        <authorList>
            <person name="Xiao G."/>
            <person name="Tsai A.L."/>
            <person name="Palmer G."/>
            <person name="Boyar W.C."/>
            <person name="Marshall P.J."/>
            <person name="Kulmacz R.J."/>
        </authorList>
    </citation>
    <scope>FUNCTION</scope>
    <scope>CATALYTIC ACTIVITY</scope>
    <scope>BIOPHYSICOCHEMICAL PROPERTIES</scope>
    <scope>ACTIVITY REGULATION</scope>
</reference>
<reference key="15">
    <citation type="journal article" date="1997" name="J. Biol. Chem.">
        <title>Mutational analysis of the role of the distal histidine and glutamine residues of prostaglandin-endoperoxide synthase-2 in peroxidase catalysis, hydroperoxide reduction, and cyclooxygenase activation.</title>
        <authorList>
            <person name="Landino L.M."/>
            <person name="Crews B.C."/>
            <person name="Gierse J.K."/>
            <person name="Hauser S.D."/>
            <person name="Marnett L.J."/>
        </authorList>
    </citation>
    <scope>FUNCTION</scope>
    <scope>CATALYTIC ACTIVITY</scope>
    <scope>MUTAGENESIS OF GLN-189 AND HIS-193</scope>
</reference>
<reference key="16">
    <citation type="journal article" date="1998" name="J. Biol. Chem.">
        <title>Subcellular localization of prostaglandin endoperoxide H synthases-1 and -2 by immunoelectron microscopy.</title>
        <authorList>
            <person name="Spencer A.G."/>
            <person name="Woods J.W."/>
            <person name="Arakawa T."/>
            <person name="Singer I.I."/>
            <person name="Smith W.L."/>
        </authorList>
    </citation>
    <scope>SUBCELLULAR LOCATION</scope>
    <scope>INDUCTION BY IL1B AND LIPOPOLYSACCHARIDE</scope>
</reference>
<reference key="17">
    <citation type="journal article" date="2000" name="J. Exp. Med.">
        <title>Novel functional sets of lipid-derived mediators with antiinflammatory actions generated from omega-3 fatty acids via cyclooxygenase 2-nonsteroidal antiinflammatory drugs and transcellular processing.</title>
        <authorList>
            <person name="Serhan C.N."/>
            <person name="Clish C.B."/>
            <person name="Brannon J."/>
            <person name="Colgan S.P."/>
            <person name="Chiang N."/>
            <person name="Gronert K."/>
        </authorList>
    </citation>
    <scope>FUNCTION</scope>
    <scope>CATALYTIC ACTIVITY</scope>
    <scope>ACTIVITY REGULATION</scope>
</reference>
<reference key="18">
    <citation type="journal article" date="2000" name="J. Physiol. Pharmacol.">
        <title>Anti-microinflammatory lipid signals generated from dietary N-3 fatty acids via cyclooxygenase-2 and transcellular processing: a novel mechanism for NSAID and N-3 PUFA therapeutic actions.</title>
        <authorList>
            <person name="Serhan C.N."/>
            <person name="Clish C.B."/>
            <person name="Brannon J."/>
            <person name="Colgan S.P."/>
            <person name="Gronert K."/>
            <person name="Chiang N."/>
        </authorList>
    </citation>
    <scope>FUNCTION</scope>
    <scope>CATALYTIC ACTIVITY</scope>
    <scope>ACTIVITY REGULATION</scope>
</reference>
<reference key="19">
    <citation type="journal article" date="2002" name="Biochem. J.">
        <title>Differential metabolism of dihomo-gamma-linolenic acid and arachidonic acid by cyclo-oxygenase-1 and cyclo-oxygenase-2: implications for cellular synthesis of prostaglandin E1 and prostaglandin E2.</title>
        <authorList>
            <person name="Levin G."/>
            <person name="Duffin K.L."/>
            <person name="Obukowicz M.G."/>
            <person name="Hummert S.L."/>
            <person name="Fujiwara H."/>
            <person name="Needleman P."/>
            <person name="Raz A."/>
        </authorList>
    </citation>
    <scope>FUNCTION</scope>
    <scope>CATALYTIC ACTIVITY</scope>
</reference>
<reference key="20">
    <citation type="journal article" date="2002" name="J. Exp. Med.">
        <title>Resolvins: a family of bioactive products of omega-3 fatty acid transformation circuits initiated by aspirin treatment that counter proinflammation signals.</title>
        <authorList>
            <person name="Serhan C.N."/>
            <person name="Hong S."/>
            <person name="Gronert K."/>
            <person name="Colgan S.P."/>
            <person name="Devchand P.R."/>
            <person name="Mirick G."/>
            <person name="Moussignac R.L."/>
        </authorList>
    </citation>
    <scope>FUNCTION</scope>
    <scope>CATALYTIC ACTIVITY</scope>
    <scope>ACTIVITY REGULATION</scope>
</reference>
<reference key="21">
    <citation type="journal article" date="2005" name="Science">
        <title>Inducible nitric oxide synthase binds, S-nitrosylates, and activates cyclooxygenase-2.</title>
        <authorList>
            <person name="Kim S.F."/>
            <person name="Huri D.A."/>
            <person name="Snyder S.H."/>
        </authorList>
    </citation>
    <scope>FUNCTION</scope>
    <scope>CATALYTIC ACTIVITY</scope>
    <scope>BIOPHYSICOCHEMICAL PROPERTIES</scope>
    <scope>S-NITROSYLATION AT CYS-526</scope>
    <scope>MUTAGENESIS OF CYS-526; CYS-555 AND CYS-561</scope>
</reference>
<reference key="22">
    <citation type="journal article" date="2006" name="FEBS Lett.">
        <title>Glycosylation regulates turnover of cyclooxygenase-2.</title>
        <authorList>
            <person name="Sevigny M.B."/>
            <person name="Li C.F."/>
            <person name="Alas M."/>
            <person name="Hughes-Fulford M."/>
        </authorList>
    </citation>
    <scope>GLYCOSYLATION AT ASN-580</scope>
</reference>
<reference key="23">
    <citation type="journal article" date="2011" name="J. Clin. Invest.">
        <title>Pro-resolving actions and stereoselective biosynthesis of 18S E-series resolvins in human leukocytes and murine inflammation.</title>
        <authorList>
            <person name="Oh S.F."/>
            <person name="Pillai P.S."/>
            <person name="Recchiuti A."/>
            <person name="Yang R."/>
            <person name="Serhan C.N."/>
        </authorList>
    </citation>
    <scope>FUNCTION</scope>
    <scope>CATALYTIC ACTIVITY</scope>
    <scope>ACTIVITY REGULATION</scope>
</reference>
<reference key="24">
    <citation type="journal article" date="2012" name="J. Biol. Chem.">
        <title>Prostaglandin H synthase-2-catalyzed oxygenation of 2-arachidonoylglycerol is more sensitive to peroxide tone than oxygenation of arachidonic acid.</title>
        <authorList>
            <person name="Musee J."/>
            <person name="Marnett L.J."/>
        </authorList>
    </citation>
    <scope>FUNCTION</scope>
    <scope>CATALYTIC ACTIVITY</scope>
</reference>
<reference key="25">
    <citation type="journal article" date="2012" name="J. Lipid Res.">
        <title>COX-2-dependent and -independent biosynthesis of dihydroxy-arachidonic acids in activated human leukocytes.</title>
        <authorList>
            <person name="Tejera N."/>
            <person name="Boeglin W.E."/>
            <person name="Suzuki T."/>
            <person name="Schneider C."/>
        </authorList>
    </citation>
    <scope>FUNCTION</scope>
    <scope>CATALYTIC ACTIVITY</scope>
    <scope>ACTIVITY REGULATION</scope>
</reference>
<reference key="26">
    <citation type="journal article" date="2015" name="Biochem. Biophys. Res. Commun.">
        <title>Inhibition of long-chain acyl-CoA synthetase 4 facilitates production of 5, 11-dihydroxyeicosatetraenoic acid via the cyclooxygenase-2 pathway.</title>
        <authorList>
            <person name="Kuwata H."/>
            <person name="Hara S."/>
        </authorList>
    </citation>
    <scope>FUNCTION</scope>
    <scope>CATALYTIC ACTIVITY</scope>
    <scope>INDUCTION BY IL1B</scope>
</reference>
<reference key="27">
    <citation type="journal article" date="2015" name="Nat. Med.">
        <title>Elucidation of novel 13-series resolvins that increase with atorvastatin and clear infections.</title>
        <authorList>
            <person name="Dalli J."/>
            <person name="Chiang N."/>
            <person name="Serhan C.N."/>
        </authorList>
    </citation>
    <scope>FUNCTION</scope>
    <scope>CATALYTIC ACTIVITY</scope>
    <scope>ACTIVITY REGULATION</scope>
    <scope>BIOPHYSICOCHEMICAL PROPERTIES</scope>
</reference>
<reference key="28">
    <citation type="journal article" date="2016" name="Cell Chem. Biol.">
        <title>Cyclooxygenase-2 Mediated Oxidation of 2-Arachidonoyl-Lysophospholipids Identifies Unknown Lipid Signaling Pathways.</title>
        <authorList>
            <person name="Liu X."/>
            <person name="Moon S.H."/>
            <person name="Jenkins C.M."/>
            <person name="Sims H.F."/>
            <person name="Gross R.W."/>
        </authorList>
    </citation>
    <scope>FUNCTION</scope>
    <scope>CATALYTIC ACTIVITY</scope>
    <scope>BIOPHYSICOCHEMICAL PROPERTIES</scope>
</reference>
<reference key="29">
    <citation type="journal article" date="2000" name="Annu. Rev. Biochem.">
        <title>Cyclooxygenases: structural, cellular, and molecular biology.</title>
        <authorList>
            <person name="Smith W.L."/>
            <person name="DeWitt D.L."/>
            <person name="Garavito R.M."/>
        </authorList>
    </citation>
    <scope>REVIEW ON FUNCTION; TISSUE SPECIFICITY AND INHIBITION BY NSAIDS</scope>
</reference>
<reference key="30">
    <citation type="journal article" date="2009" name="Prostaglandins Leukot. Essent. Fatty Acids">
        <title>The essentiality of arachidonic acid and docosahexaenoic acid.</title>
        <authorList>
            <person name="Le H.D."/>
            <person name="Meisel J.A."/>
            <person name="de Meijer V.E."/>
            <person name="Gura K.M."/>
            <person name="Puder M."/>
        </authorList>
    </citation>
    <scope>REVIEW ON FUNCTION</scope>
    <scope>CATALYTIC ACTIVITY</scope>
</reference>
<reference key="31">
    <citation type="journal article" date="2014" name="World J. Gastrointest. Pharmacol. Ther.">
        <title>Aspirin, cyclooxygenase inhibition and colorectal cancer.</title>
        <authorList>
            <person name="Sostres C."/>
            <person name="Gargallo C.J."/>
            <person name="Lanas A."/>
        </authorList>
    </citation>
    <scope>REVIEW ON FUNCTION; INHIBITION BY ASPIRIN AND INVOLVEMENT IN COLORECTAL CANCER</scope>
</reference>
<reference evidence="55" key="32">
    <citation type="journal article" date="2016" name="Acta Crystallogr. F">
        <title>Crystal structure of rofecoxib bound to human cyclooxygenase-2.</title>
        <authorList>
            <person name="Orlando B.J."/>
            <person name="Malkowski M.G."/>
        </authorList>
    </citation>
    <scope>X-RAY CRYSTALLOGRAPHY (2.70 ANGSTROMS) OF 19-569 IN COMPLEX WITH PROTOPORPHYRIN IX AND ROFECOXIB</scope>
    <scope>COFACTOR</scope>
    <scope>GLYCOSYLATION AT ASN-130 AND ASN-396</scope>
    <scope>DISULFIDE BONDS</scope>
</reference>
<reference evidence="49 50" key="33">
    <citation type="journal article" date="2016" name="Biochemistry">
        <title>Crystal Structure of Aspirin-Acetylated Human Cyclooxygenase-2: Insight into the Formation of Products with Reversed Stereochemistry.</title>
        <authorList>
            <person name="Lucido M.J."/>
            <person name="Orlando B.J."/>
            <person name="Vecchio A.J."/>
            <person name="Malkowski M.G."/>
        </authorList>
    </citation>
    <scope>X-RAY CRYSTALLOGRAPHY (2.04 ANGSTROMS) OF 19-569 IN COMPLEX WITH PROTOPORPHYRIN IX AND SALICYLIC ACID</scope>
    <scope>FUNCTION</scope>
    <scope>CATALYTIC ACTIVITY</scope>
    <scope>COFACTOR</scope>
    <scope>BIOPHYSICOCHEMICAL PROPERTIES</scope>
    <scope>SUBUNIT</scope>
    <scope>MUTAGENESIS OF SER-516 AND GLY-519</scope>
    <scope>ACTIVITY REGULATION</scope>
    <scope>GLYCOSYLATION AT ASN-53; ASN-130 AND ASN-396</scope>
    <scope>DISULFIDE BONDS</scope>
</reference>
<reference evidence="51 52 53 54" key="34">
    <citation type="journal article" date="2016" name="J. Biol. Chem.">
        <title>Substrate-selective Inhibition of Cyclooxygeanse-2 by Fenamic Acid Derivatives Is Dependent on Peroxide Tone.</title>
        <authorList>
            <person name="Orlando B.J."/>
            <person name="Malkowski M.G."/>
        </authorList>
    </citation>
    <scope>X-RAY CRYSTALLOGRAPHY (2.34 ANGSTROMS) OF 19-569 IN COMPLEX WITH PROTOPORPHYRIN IX AND FLUFENAMIC ACID</scope>
    <scope>FUNCTION</scope>
    <scope>CATALYTIC ACTIVITY</scope>
    <scope>ACTIVITY REGULATION</scope>
    <scope>COFACTOR</scope>
    <scope>SUBUNIT</scope>
    <scope>GLYCOSYLATION AT ASN-53; ASN-130 AND ASN-396</scope>
    <scope>DISULFIDE BONDS</scope>
    <scope>MUTAGENESIS OF TYR-371 AND SER-516</scope>
</reference>
<reference key="35">
    <citation type="journal article" date="2004" name="Carcinogenesis">
        <title>Arachidonate lipoxygenase (ALOX) and cyclooxygenase (COX) polymorphisms and colon cancer risk.</title>
        <authorList>
            <person name="Goodman J.E."/>
            <person name="Bowman E.D."/>
            <person name="Chanock S.J."/>
            <person name="Alberg A.J."/>
            <person name="Harris C.C."/>
        </authorList>
    </citation>
    <scope>VARIANT ALA-511</scope>
</reference>
<accession>P35354</accession>
<accession>A8K802</accession>
<accession>Q16876</accession>
<comment type="function">
    <text evidence="1 2 6 7 8 9 11 13 14 15 16 17 18 19 20 22 23 24 25 29">Dual cyclooxygenase and peroxidase in the biosynthesis pathway of prostanoids, a class of C20 oxylipins mainly derived from arachidonate ((5Z,8Z,11Z,14Z)-eicosatetraenoate, AA, C20:4(n-6)), with a particular role in the inflammatory response (PubMed:11939906, PubMed:16373578, PubMed:19540099, PubMed:22942274, PubMed:26859324, PubMed:27226593, PubMed:7592599, PubMed:7947975, PubMed:9261177). The cyclooxygenase activity oxygenates AA to the hydroperoxy endoperoxide prostaglandin G2 (PGG2), and the peroxidase activity reduces PGG2 to the hydroxy endoperoxide prostaglandin H2 (PGH2), the precursor of all 2-series prostaglandins and thromboxanes (PubMed:16373578, PubMed:22942274, PubMed:26859324, PubMed:27226593, PubMed:7592599, PubMed:7947975, PubMed:9261177). This complex transformation is initiated by abstraction of hydrogen at carbon 13 (with S-stereochemistry), followed by insertion of molecular O2 to form the endoperoxide bridge between carbon 9 and 11 that defines prostaglandins. The insertion of a second molecule of O2 (bis-oxygenase activity) yields a hydroperoxy group in PGG2 that is then reduced to PGH2 by two electrons (PubMed:16373578, PubMed:22942274, PubMed:26859324, PubMed:27226593, PubMed:7592599, PubMed:7947975, PubMed:9261177). Similarly catalyzes successive cyclooxygenation and peroxidation of dihomo-gamma-linoleate (DGLA, C20:3(n-6)) and eicosapentaenoate (EPA, C20:5(n-3)) to corresponding PGH1 and PGH3, the precursors of 1- and 3-series prostaglandins (PubMed:11939906, PubMed:19540099). In an alternative pathway of prostanoid biosynthesis, converts 2-arachidonoyl lysophopholipids to prostanoid lysophopholipids, which are then hydrolyzed by intracellular phospholipases to release free prostanoids (PubMed:27642067). Metabolizes 2-arachidonoyl glycerol yielding the glyceryl ester of PGH2, a process that can contribute to pain response (PubMed:22942274). Generates lipid mediators from n-3 and n-6 polyunsaturated fatty acids (PUFAs) via a lipoxygenase-type mechanism. Oxygenates PUFAs to hydroperoxy compounds and then reduces them to corresponding alcohols (PubMed:11034610, PubMed:11192938, PubMed:9048568, PubMed:9261177). Plays a role in the generation of resolution phase interaction products (resolvins) during both sterile and infectious inflammation (PubMed:12391014). Metabolizes docosahexaenoate (DHA, C22:6(n-3)) to 17R-HDHA, a precursor of the D-series resolvins (RvDs) (PubMed:12391014). As a component of the biosynthetic pathway of E-series resolvins (RvEs), converts eicosapentaenoate (EPA, C20:5(n-3)) primarily to 18S-HEPE that is further metabolized by ALOX5 and LTA4H to generate 18S-RvE1 and 18S-RvE2 (PubMed:21206090). In vascular endothelial cells, converts docosapentaenoate (DPA, C22:5(n-3)) to 13R-HDPA, a precursor for 13-series resolvins (RvTs) shown to activate macrophage phagocytosis during bacterial infection (PubMed:26236990). In activated leukocytes, contributes to oxygenation of hydroxyeicosatetraenoates (HETE) to diHETES (5,15-diHETE and 5,11-diHETE) (PubMed:22068350, PubMed:26282205). Can also use linoleate (LA, (9Z,12Z)-octadecadienoate, C18:2(n-6)) as substrate and produce hydroxyoctadecadienoates (HODEs) in a regio- and stereospecific manner, being (9R)-HODE ((9R)-hydroxy-(10E,12Z)-octadecadienoate) and (13S)-HODE ((13S)-hydroxy-(9Z,11E)-octadecadienoate) its major products (By similarity). During neuroinflammation, plays a role in neuronal secretion of specialized preresolving mediators (SPMs) 15R-lipoxin A4 that regulates phagocytic microglia (By similarity).</text>
</comment>
<comment type="catalytic activity">
    <reaction evidence="11 15 18 19 22 23 25">
        <text>(5Z,8Z,11Z,14Z)-eicosatetraenoate + AH2 + 2 O2 = prostaglandin H2 + A + H2O</text>
        <dbReference type="Rhea" id="RHEA:23728"/>
        <dbReference type="ChEBI" id="CHEBI:13193"/>
        <dbReference type="ChEBI" id="CHEBI:15377"/>
        <dbReference type="ChEBI" id="CHEBI:15379"/>
        <dbReference type="ChEBI" id="CHEBI:17499"/>
        <dbReference type="ChEBI" id="CHEBI:32395"/>
        <dbReference type="ChEBI" id="CHEBI:57405"/>
        <dbReference type="EC" id="1.14.99.1"/>
    </reaction>
    <physiologicalReaction direction="left-to-right" evidence="35 38 41 42 44 45 47">
        <dbReference type="Rhea" id="RHEA:23729"/>
    </physiologicalReaction>
</comment>
<comment type="catalytic activity">
    <reaction evidence="15 22 23 25">
        <text>(5Z,8Z,11Z,14Z)-eicosatetraenoate + 2 O2 = prostaglandin G2</text>
        <dbReference type="Rhea" id="RHEA:42596"/>
        <dbReference type="ChEBI" id="CHEBI:15379"/>
        <dbReference type="ChEBI" id="CHEBI:32395"/>
        <dbReference type="ChEBI" id="CHEBI:82629"/>
    </reaction>
    <physiologicalReaction direction="left-to-right" evidence="38 44 45 47">
        <dbReference type="Rhea" id="RHEA:42597"/>
    </physiologicalReaction>
</comment>
<comment type="catalytic activity">
    <reaction evidence="15 22 23 25">
        <text>prostaglandin G2 + AH2 = prostaglandin H2 + A + H2O</text>
        <dbReference type="Rhea" id="RHEA:42600"/>
        <dbReference type="ChEBI" id="CHEBI:13193"/>
        <dbReference type="ChEBI" id="CHEBI:15377"/>
        <dbReference type="ChEBI" id="CHEBI:17499"/>
        <dbReference type="ChEBI" id="CHEBI:57405"/>
        <dbReference type="ChEBI" id="CHEBI:82629"/>
    </reaction>
    <physiologicalReaction direction="left-to-right" evidence="38 44 45 47">
        <dbReference type="Rhea" id="RHEA:42601"/>
    </physiologicalReaction>
</comment>
<comment type="catalytic activity">
    <reaction evidence="29">
        <text>(5Z,8Z,11Z,14Z,17Z)-eicosapentaenoate + 2 O2 = prostaglandin G3</text>
        <dbReference type="Rhea" id="RHEA:50444"/>
        <dbReference type="ChEBI" id="CHEBI:15379"/>
        <dbReference type="ChEBI" id="CHEBI:58562"/>
        <dbReference type="ChEBI" id="CHEBI:133133"/>
    </reaction>
    <physiologicalReaction direction="left-to-right" evidence="29">
        <dbReference type="Rhea" id="RHEA:50445"/>
    </physiologicalReaction>
</comment>
<comment type="catalytic activity">
    <reaction evidence="29">
        <text>prostaglandin G3 + AH2 = prostaglandin H3 + A + H2O</text>
        <dbReference type="Rhea" id="RHEA:50448"/>
        <dbReference type="ChEBI" id="CHEBI:13193"/>
        <dbReference type="ChEBI" id="CHEBI:15377"/>
        <dbReference type="ChEBI" id="CHEBI:17499"/>
        <dbReference type="ChEBI" id="CHEBI:133133"/>
        <dbReference type="ChEBI" id="CHEBI:133134"/>
    </reaction>
    <physiologicalReaction direction="left-to-right" evidence="29">
        <dbReference type="Rhea" id="RHEA:50449"/>
    </physiologicalReaction>
</comment>
<comment type="catalytic activity">
    <reaction evidence="8">
        <text>(8Z,11Z,14Z)-eicosatrienoate + 2 O2 = prostaglandin G1</text>
        <dbReference type="Rhea" id="RHEA:50424"/>
        <dbReference type="ChEBI" id="CHEBI:15379"/>
        <dbReference type="ChEBI" id="CHEBI:71589"/>
        <dbReference type="ChEBI" id="CHEBI:133084"/>
    </reaction>
    <physiologicalReaction direction="left-to-right" evidence="33">
        <dbReference type="Rhea" id="RHEA:50425"/>
    </physiologicalReaction>
</comment>
<comment type="catalytic activity">
    <reaction evidence="8">
        <text>prostaglandin G1 + AH2 = prostaglandin H1 + A + H2O</text>
        <dbReference type="Rhea" id="RHEA:50432"/>
        <dbReference type="ChEBI" id="CHEBI:13193"/>
        <dbReference type="ChEBI" id="CHEBI:15377"/>
        <dbReference type="ChEBI" id="CHEBI:17499"/>
        <dbReference type="ChEBI" id="CHEBI:90793"/>
        <dbReference type="ChEBI" id="CHEBI:133084"/>
    </reaction>
    <physiologicalReaction direction="left-to-right" evidence="33">
        <dbReference type="Rhea" id="RHEA:50433"/>
    </physiologicalReaction>
</comment>
<comment type="catalytic activity">
    <reaction evidence="20">
        <text>2-(5Z,8Z,11Z,14Z)-eicosatetraenoyl-sn-glycero-3-phosphoethanolamine + 2 O2 = 2-(prostaglandin G2)-sn-glycero-3-phosphoethanolamine</text>
        <dbReference type="Rhea" id="RHEA:54204"/>
        <dbReference type="ChEBI" id="CHEBI:15379"/>
        <dbReference type="ChEBI" id="CHEBI:76091"/>
        <dbReference type="ChEBI" id="CHEBI:138098"/>
    </reaction>
    <physiologicalReaction direction="left-to-right" evidence="43">
        <dbReference type="Rhea" id="RHEA:54205"/>
    </physiologicalReaction>
</comment>
<comment type="catalytic activity">
    <reaction evidence="20">
        <text>2-(prostaglandin G2)-sn-glycero-3-phosphoethanolamine + AH2 = 2-(prostaglandin H2)-sn-glycero-3-phosphoethanolamine + A + H2O</text>
        <dbReference type="Rhea" id="RHEA:54208"/>
        <dbReference type="ChEBI" id="CHEBI:13193"/>
        <dbReference type="ChEBI" id="CHEBI:15377"/>
        <dbReference type="ChEBI" id="CHEBI:17499"/>
        <dbReference type="ChEBI" id="CHEBI:138098"/>
        <dbReference type="ChEBI" id="CHEBI:138099"/>
    </reaction>
    <physiologicalReaction direction="left-to-right" evidence="43">
        <dbReference type="Rhea" id="RHEA:54209"/>
    </physiologicalReaction>
</comment>
<comment type="catalytic activity">
    <reaction evidence="20">
        <text>2-(5Z,8Z,11Z,14Z)-eicosatetraenoyl-sn-glycero-3-phosphocholine + 2 O2 = 2-(prostaglandin G2)-sn-glycero-3-phosphocholine</text>
        <dbReference type="Rhea" id="RHEA:54212"/>
        <dbReference type="ChEBI" id="CHEBI:15379"/>
        <dbReference type="ChEBI" id="CHEBI:76079"/>
        <dbReference type="ChEBI" id="CHEBI:138100"/>
    </reaction>
    <physiologicalReaction direction="left-to-right" evidence="43">
        <dbReference type="Rhea" id="RHEA:54213"/>
    </physiologicalReaction>
</comment>
<comment type="catalytic activity">
    <reaction evidence="20">
        <text>2-(prostaglandin G2)-sn-glycero-3-phosphocholine + AH2 = 2-(prostaglandin H2)-sn-glycero-3-phosphocholine + A + H2O</text>
        <dbReference type="Rhea" id="RHEA:54216"/>
        <dbReference type="ChEBI" id="CHEBI:13193"/>
        <dbReference type="ChEBI" id="CHEBI:15377"/>
        <dbReference type="ChEBI" id="CHEBI:17499"/>
        <dbReference type="ChEBI" id="CHEBI:138100"/>
        <dbReference type="ChEBI" id="CHEBI:138101"/>
    </reaction>
    <physiologicalReaction direction="left-to-right" evidence="43">
        <dbReference type="Rhea" id="RHEA:54217"/>
    </physiologicalReaction>
</comment>
<comment type="catalytic activity">
    <reaction evidence="25">
        <text>(15S)-hydroperoxy-(5Z,8Z,11Z,13E)-eicosatetraenoate + AH2 = (15S)-hydroxy-(5Z,8Z,11Z,13E)-eicosatetraenoate + A + H2O</text>
        <dbReference type="Rhea" id="RHEA:48856"/>
        <dbReference type="ChEBI" id="CHEBI:13193"/>
        <dbReference type="ChEBI" id="CHEBI:15377"/>
        <dbReference type="ChEBI" id="CHEBI:17499"/>
        <dbReference type="ChEBI" id="CHEBI:57409"/>
        <dbReference type="ChEBI" id="CHEBI:57446"/>
    </reaction>
    <physiologicalReaction direction="left-to-right" evidence="47">
        <dbReference type="Rhea" id="RHEA:48857"/>
    </physiologicalReaction>
</comment>
<comment type="catalytic activity">
    <reaction evidence="20">
        <text>2-(5Z,8Z,11Z,14Z)-eicosatetraenoyl-sn-glycero-3-phosphocholine + AH2 + O2 = 2-[(15S)-hydroxy-(5Z,8Z,11Z,13E)-eicosatetraenoyl]-sn-glycero-3-phosphocholine + A + H2O</text>
        <dbReference type="Rhea" id="RHEA:53684"/>
        <dbReference type="ChEBI" id="CHEBI:13193"/>
        <dbReference type="ChEBI" id="CHEBI:15377"/>
        <dbReference type="ChEBI" id="CHEBI:15379"/>
        <dbReference type="ChEBI" id="CHEBI:17499"/>
        <dbReference type="ChEBI" id="CHEBI:76079"/>
        <dbReference type="ChEBI" id="CHEBI:137584"/>
    </reaction>
    <physiologicalReaction direction="left-to-right" evidence="43">
        <dbReference type="Rhea" id="RHEA:53685"/>
    </physiologicalReaction>
</comment>
<comment type="catalytic activity">
    <reaction evidence="20">
        <text>2-(5Z,8Z,11Z,14Z)-eicosatetraenoyl-sn-glycero-3-phosphocholine + AH2 + O2 = 2-[(15R)-hydroxy-(5Z,8Z,11Z,13E)-eicosatetraenoyl]-sn-glycero-3-phosphocholine + A + H2O</text>
        <dbReference type="Rhea" id="RHEA:53680"/>
        <dbReference type="ChEBI" id="CHEBI:13193"/>
        <dbReference type="ChEBI" id="CHEBI:15377"/>
        <dbReference type="ChEBI" id="CHEBI:15379"/>
        <dbReference type="ChEBI" id="CHEBI:17499"/>
        <dbReference type="ChEBI" id="CHEBI:76079"/>
        <dbReference type="ChEBI" id="CHEBI:137583"/>
    </reaction>
    <physiologicalReaction direction="left-to-right" evidence="43">
        <dbReference type="Rhea" id="RHEA:53681"/>
    </physiologicalReaction>
</comment>
<comment type="catalytic activity">
    <reaction evidence="20">
        <text>2-(5Z,8Z,11Z,14Z)-eicosatetraenoyl-sn-glycero-3-phosphocholine + AH2 + O2 = 2-[(11R)-hydroxy-(5Z,8Z,12E,14Z)-eicosatetraenoyl]-sn-glycero-3-phosphocholine + A + H2O</text>
        <dbReference type="Rhea" id="RHEA:53676"/>
        <dbReference type="ChEBI" id="CHEBI:13193"/>
        <dbReference type="ChEBI" id="CHEBI:15377"/>
        <dbReference type="ChEBI" id="CHEBI:15379"/>
        <dbReference type="ChEBI" id="CHEBI:17499"/>
        <dbReference type="ChEBI" id="CHEBI:76079"/>
        <dbReference type="ChEBI" id="CHEBI:137582"/>
    </reaction>
    <physiologicalReaction direction="left-to-right" evidence="43">
        <dbReference type="Rhea" id="RHEA:53677"/>
    </physiologicalReaction>
</comment>
<comment type="catalytic activity">
    <reaction evidence="6 7">
        <text>(9Z,12Z)-octadecadienoate + AH2 + O2 = 9-hydroxy-(10E,12Z)-octadecadienoate + A + H2O</text>
        <dbReference type="Rhea" id="RHEA:50864"/>
        <dbReference type="ChEBI" id="CHEBI:13193"/>
        <dbReference type="ChEBI" id="CHEBI:15377"/>
        <dbReference type="ChEBI" id="CHEBI:15379"/>
        <dbReference type="ChEBI" id="CHEBI:17499"/>
        <dbReference type="ChEBI" id="CHEBI:30245"/>
        <dbReference type="ChEBI" id="CHEBI:133820"/>
    </reaction>
    <physiologicalReaction direction="left-to-right" evidence="31 32">
        <dbReference type="Rhea" id="RHEA:50865"/>
    </physiologicalReaction>
</comment>
<comment type="catalytic activity">
    <reaction evidence="6 7">
        <text>(9Z,12Z)-octadecadienoate + AH2 + O2 = 13-hydroxy-(9Z,11E)-octadecadienoate + A + H2O</text>
        <dbReference type="Rhea" id="RHEA:50860"/>
        <dbReference type="ChEBI" id="CHEBI:13193"/>
        <dbReference type="ChEBI" id="CHEBI:15377"/>
        <dbReference type="ChEBI" id="CHEBI:15379"/>
        <dbReference type="ChEBI" id="CHEBI:17499"/>
        <dbReference type="ChEBI" id="CHEBI:30245"/>
        <dbReference type="ChEBI" id="CHEBI:133819"/>
    </reaction>
    <physiologicalReaction direction="left-to-right" evidence="31 32">
        <dbReference type="Rhea" id="RHEA:50861"/>
    </physiologicalReaction>
</comment>
<comment type="catalytic activity">
    <reaction evidence="6 7">
        <text>(5Z,8Z,11Z,14Z)-eicosatetraenoate + AH2 + O2 = (15R)-hydroxy-(5Z,8Z,11Z,13E)-eicosatetraenoate + A + H2O</text>
        <dbReference type="Rhea" id="RHEA:50856"/>
        <dbReference type="ChEBI" id="CHEBI:13193"/>
        <dbReference type="ChEBI" id="CHEBI:15377"/>
        <dbReference type="ChEBI" id="CHEBI:15379"/>
        <dbReference type="ChEBI" id="CHEBI:17499"/>
        <dbReference type="ChEBI" id="CHEBI:32395"/>
        <dbReference type="ChEBI" id="CHEBI:78837"/>
    </reaction>
    <physiologicalReaction direction="left-to-right" evidence="31 32">
        <dbReference type="Rhea" id="RHEA:50857"/>
    </physiologicalReaction>
</comment>
<comment type="catalytic activity">
    <reaction evidence="6 7">
        <text>(5Z,8Z,11Z,14Z)-eicosatetraenoate + AH2 + O2 = (11R)-hydroxy-(5Z,8Z,12E,14Z)-eicosatetraenoate + A + H2O</text>
        <dbReference type="Rhea" id="RHEA:50852"/>
        <dbReference type="ChEBI" id="CHEBI:13193"/>
        <dbReference type="ChEBI" id="CHEBI:15377"/>
        <dbReference type="ChEBI" id="CHEBI:15379"/>
        <dbReference type="ChEBI" id="CHEBI:17499"/>
        <dbReference type="ChEBI" id="CHEBI:32395"/>
        <dbReference type="ChEBI" id="CHEBI:78836"/>
    </reaction>
    <physiologicalReaction direction="left-to-right" evidence="31 32">
        <dbReference type="Rhea" id="RHEA:50853"/>
    </physiologicalReaction>
</comment>
<comment type="catalytic activity">
    <reaction evidence="6 7">
        <text>(5Z,8Z,11Z,14Z,17Z)-eicosapentaenoate + AH2 + O2 = (11R)-hydroxy-(5Z,8Z,12E,14Z,17Z)-eicosapentaenoate + A + H2O</text>
        <dbReference type="Rhea" id="RHEA:50848"/>
        <dbReference type="ChEBI" id="CHEBI:13193"/>
        <dbReference type="ChEBI" id="CHEBI:15377"/>
        <dbReference type="ChEBI" id="CHEBI:15379"/>
        <dbReference type="ChEBI" id="CHEBI:17499"/>
        <dbReference type="ChEBI" id="CHEBI:58562"/>
        <dbReference type="ChEBI" id="CHEBI:90820"/>
    </reaction>
    <physiologicalReaction direction="left-to-right" evidence="31 32">
        <dbReference type="Rhea" id="RHEA:50849"/>
    </physiologicalReaction>
</comment>
<comment type="catalytic activity">
    <reaction evidence="13">
        <text>(5Z,8Z,11Z,14Z,17Z)-eicosapentaenoate + AH2 + O2 = (18S)-hydroxy-(5Z,8Z,11Z,14Z,16E)-eicosapentaenoate + A + H2O</text>
        <dbReference type="Rhea" id="RHEA:50200"/>
        <dbReference type="ChEBI" id="CHEBI:13193"/>
        <dbReference type="ChEBI" id="CHEBI:15377"/>
        <dbReference type="ChEBI" id="CHEBI:15379"/>
        <dbReference type="ChEBI" id="CHEBI:17499"/>
        <dbReference type="ChEBI" id="CHEBI:58562"/>
        <dbReference type="ChEBI" id="CHEBI:132083"/>
    </reaction>
    <physiologicalReaction direction="left-to-right" evidence="36">
        <dbReference type="Rhea" id="RHEA:50201"/>
    </physiologicalReaction>
</comment>
<comment type="catalytic activity">
    <reaction evidence="6 7 13">
        <text>(5Z,8Z,11Z,14Z,17Z)-eicosapentaenoate + AH2 + O2 = (18R)-hydroxy-(5Z,8Z,11Z,14Z,16E)-eicosapentaenoate + A + H2O</text>
        <dbReference type="Rhea" id="RHEA:48836"/>
        <dbReference type="ChEBI" id="CHEBI:13193"/>
        <dbReference type="ChEBI" id="CHEBI:15377"/>
        <dbReference type="ChEBI" id="CHEBI:15379"/>
        <dbReference type="ChEBI" id="CHEBI:17499"/>
        <dbReference type="ChEBI" id="CHEBI:58562"/>
        <dbReference type="ChEBI" id="CHEBI:90818"/>
    </reaction>
    <physiologicalReaction direction="left-to-right" evidence="31 32 36">
        <dbReference type="Rhea" id="RHEA:48837"/>
    </physiologicalReaction>
</comment>
<comment type="catalytic activity">
    <reaction evidence="6 7 13">
        <text>(5Z,8Z,11Z,14Z,17Z)-eicosapentaenoate + AH2 + O2 = (15R)-hydroxy-(5Z,8Z,11Z,13E,17Z)-eicosapentaenoate + A + H2O</text>
        <dbReference type="Rhea" id="RHEA:48840"/>
        <dbReference type="ChEBI" id="CHEBI:13193"/>
        <dbReference type="ChEBI" id="CHEBI:15377"/>
        <dbReference type="ChEBI" id="CHEBI:15379"/>
        <dbReference type="ChEBI" id="CHEBI:17499"/>
        <dbReference type="ChEBI" id="CHEBI:58562"/>
        <dbReference type="ChEBI" id="CHEBI:90819"/>
    </reaction>
    <physiologicalReaction direction="left-to-right" evidence="31 32 36">
        <dbReference type="Rhea" id="RHEA:48841"/>
    </physiologicalReaction>
</comment>
<comment type="catalytic activity">
    <reaction evidence="13">
        <text>(5Z,8Z,11Z,14Z,17Z)-eicosapentaenoate + AH2 + O2 = (15S)-hydroxy-(5Z,8Z,11Z,13E,17Z)-eicosapentaenoate + A + H2O</text>
        <dbReference type="Rhea" id="RHEA:50196"/>
        <dbReference type="ChEBI" id="CHEBI:13193"/>
        <dbReference type="ChEBI" id="CHEBI:15377"/>
        <dbReference type="ChEBI" id="CHEBI:15379"/>
        <dbReference type="ChEBI" id="CHEBI:17499"/>
        <dbReference type="ChEBI" id="CHEBI:58562"/>
        <dbReference type="ChEBI" id="CHEBI:132087"/>
    </reaction>
    <physiologicalReaction direction="left-to-right" evidence="36">
        <dbReference type="Rhea" id="RHEA:50197"/>
    </physiologicalReaction>
</comment>
<comment type="catalytic activity">
    <reaction evidence="16">
        <text>(7Z,10Z,13Z,16Z,19Z)-docosapentaenoate + AH2 + O2 = 13R-hydroxy-(7Z,10Z,14E,16Z,19Z)-docosapentaenoate + A + H2O</text>
        <dbReference type="Rhea" id="RHEA:48852"/>
        <dbReference type="ChEBI" id="CHEBI:13193"/>
        <dbReference type="ChEBI" id="CHEBI:15377"/>
        <dbReference type="ChEBI" id="CHEBI:15379"/>
        <dbReference type="ChEBI" id="CHEBI:17499"/>
        <dbReference type="ChEBI" id="CHEBI:77224"/>
        <dbReference type="ChEBI" id="CHEBI:90824"/>
    </reaction>
    <physiologicalReaction direction="left-to-right" evidence="39">
        <dbReference type="Rhea" id="RHEA:48853"/>
    </physiologicalReaction>
</comment>
<comment type="catalytic activity">
    <reaction evidence="9">
        <text>(4Z,7Z,10Z,13Z,16Z,19Z)-docosahexaenoate + AH2 + O2 = 13-hydroxy-(4Z,7Z,10Z,14E,16Z,19Z)-docosahexaenoate + A + H2O</text>
        <dbReference type="Rhea" id="RHEA:48820"/>
        <dbReference type="ChEBI" id="CHEBI:13193"/>
        <dbReference type="ChEBI" id="CHEBI:15377"/>
        <dbReference type="ChEBI" id="CHEBI:15379"/>
        <dbReference type="ChEBI" id="CHEBI:17499"/>
        <dbReference type="ChEBI" id="CHEBI:77016"/>
        <dbReference type="ChEBI" id="CHEBI:90815"/>
    </reaction>
    <physiologicalReaction direction="left-to-right" evidence="34">
        <dbReference type="Rhea" id="RHEA:48821"/>
    </physiologicalReaction>
</comment>
<comment type="catalytic activity">
    <reaction evidence="14">
        <text>(5S)-hydroxy-(6E,8Z,11Z,14Z)-eicosatetraenoate + AH2 + O2 = (5S,15R)-dihydroxy-(6E,8Z,11Z,13E)-eicosatetraenoate + A + H2O</text>
        <dbReference type="Rhea" id="RHEA:48812"/>
        <dbReference type="ChEBI" id="CHEBI:13193"/>
        <dbReference type="ChEBI" id="CHEBI:15377"/>
        <dbReference type="ChEBI" id="CHEBI:15379"/>
        <dbReference type="ChEBI" id="CHEBI:17499"/>
        <dbReference type="ChEBI" id="CHEBI:90632"/>
        <dbReference type="ChEBI" id="CHEBI:90812"/>
    </reaction>
    <physiologicalReaction direction="left-to-right" evidence="37">
        <dbReference type="Rhea" id="RHEA:48813"/>
    </physiologicalReaction>
</comment>
<comment type="catalytic activity">
    <reaction evidence="9">
        <text>(4Z,7Z,10Z,13Z,16Z,19Z)-docosahexaenoate + AH2 + O2 = 17R-hydroxy-(4Z,7Z,10Z,13Z,15E,19Z)-docosahexaenoate + A + H2O</text>
        <dbReference type="Rhea" id="RHEA:48816"/>
        <dbReference type="ChEBI" id="CHEBI:13193"/>
        <dbReference type="ChEBI" id="CHEBI:15377"/>
        <dbReference type="ChEBI" id="CHEBI:15379"/>
        <dbReference type="ChEBI" id="CHEBI:17499"/>
        <dbReference type="ChEBI" id="CHEBI:77016"/>
        <dbReference type="ChEBI" id="CHEBI:90814"/>
    </reaction>
    <physiologicalReaction direction="left-to-right" evidence="34">
        <dbReference type="Rhea" id="RHEA:48817"/>
    </physiologicalReaction>
</comment>
<comment type="catalytic activity">
    <reaction evidence="14">
        <text>(5S)-hydroxy-(6E,8Z,11Z,14Z)-eicosatetraenoate + AH2 + O2 = (5S,15S)-dihydroxy-(6E,8Z,11Z,13E)-eicosatetraenoate + A + H2O</text>
        <dbReference type="Rhea" id="RHEA:48808"/>
        <dbReference type="ChEBI" id="CHEBI:13193"/>
        <dbReference type="ChEBI" id="CHEBI:15377"/>
        <dbReference type="ChEBI" id="CHEBI:15379"/>
        <dbReference type="ChEBI" id="CHEBI:17499"/>
        <dbReference type="ChEBI" id="CHEBI:90632"/>
        <dbReference type="ChEBI" id="CHEBI:90813"/>
    </reaction>
    <physiologicalReaction direction="left-to-right" evidence="37">
        <dbReference type="Rhea" id="RHEA:48809"/>
    </physiologicalReaction>
</comment>
<comment type="catalytic activity">
    <reaction evidence="14 17">
        <text>(5S)-hydroxy-(6E,8Z,11Z,14Z)-eicosatetraenoate + AH2 + O2 = (5S,11R)-dihydroxy-(6E,8Z,12E,14Z)-eicosatetraenoate + A + H2O</text>
        <dbReference type="Rhea" id="RHEA:48804"/>
        <dbReference type="ChEBI" id="CHEBI:13193"/>
        <dbReference type="ChEBI" id="CHEBI:15377"/>
        <dbReference type="ChEBI" id="CHEBI:15379"/>
        <dbReference type="ChEBI" id="CHEBI:17499"/>
        <dbReference type="ChEBI" id="CHEBI:90632"/>
        <dbReference type="ChEBI" id="CHEBI:90810"/>
    </reaction>
    <physiologicalReaction direction="left-to-right" evidence="37 40">
        <dbReference type="Rhea" id="RHEA:48805"/>
    </physiologicalReaction>
</comment>
<comment type="catalytic activity">
    <reaction evidence="15">
        <text>2-(5Z,8Z,11Z,14Z-eicosatetraenoyl)-glycerol + 2 O2 = 2-glyceryl-prostaglandin G2</text>
        <dbReference type="Rhea" id="RHEA:45288"/>
        <dbReference type="ChEBI" id="CHEBI:15379"/>
        <dbReference type="ChEBI" id="CHEBI:52392"/>
        <dbReference type="ChEBI" id="CHEBI:85165"/>
    </reaction>
    <physiologicalReaction direction="left-to-right" evidence="38">
        <dbReference type="Rhea" id="RHEA:45289"/>
    </physiologicalReaction>
</comment>
<comment type="catalytic activity">
    <reaction evidence="15">
        <text>2-glyceryl-prostaglandin G2 + AH2 = 2-glyceryl-prostaglandin H2 + A + H2O</text>
        <dbReference type="Rhea" id="RHEA:45292"/>
        <dbReference type="ChEBI" id="CHEBI:13193"/>
        <dbReference type="ChEBI" id="CHEBI:15377"/>
        <dbReference type="ChEBI" id="CHEBI:17499"/>
        <dbReference type="ChEBI" id="CHEBI:85165"/>
        <dbReference type="ChEBI" id="CHEBI:85166"/>
    </reaction>
    <physiologicalReaction direction="left-to-right" evidence="38">
        <dbReference type="Rhea" id="RHEA:45293"/>
    </physiologicalReaction>
</comment>
<comment type="catalytic activity">
    <reaction evidence="24">
        <text>(5Z,8Z,11Z,14Z)-eicosatetraenoate + O2 = (15R)-hydroperoxy-(5Z,8Z,11Z,13E)-eicosatetraenoate</text>
        <dbReference type="Rhea" id="RHEA:42284"/>
        <dbReference type="ChEBI" id="CHEBI:15379"/>
        <dbReference type="ChEBI" id="CHEBI:32395"/>
        <dbReference type="ChEBI" id="CHEBI:82626"/>
    </reaction>
    <physiologicalReaction direction="left-to-right" evidence="46">
        <dbReference type="Rhea" id="RHEA:42285"/>
    </physiologicalReaction>
</comment>
<comment type="catalytic activity">
    <reaction evidence="24">
        <text>(5Z,8Z,11Z,14Z)-eicosatetraenoate + O2 = 11R-hydroperoxy-(5Z,8Z,12E,14Z)-eicosatetraenoate</text>
        <dbReference type="Rhea" id="RHEA:42280"/>
        <dbReference type="ChEBI" id="CHEBI:15379"/>
        <dbReference type="ChEBI" id="CHEBI:32395"/>
        <dbReference type="ChEBI" id="CHEBI:82628"/>
    </reaction>
    <physiologicalReaction direction="left-to-right" evidence="46">
        <dbReference type="Rhea" id="RHEA:42281"/>
    </physiologicalReaction>
</comment>
<comment type="catalytic activity">
    <reaction evidence="1">
        <text>(9Z,12Z)-octadecadienoate + AH2 + O2 = (9R)-hydroxy-(10E,12Z)-octadecadienoate + A + H2O</text>
        <dbReference type="Rhea" id="RHEA:75447"/>
        <dbReference type="ChEBI" id="CHEBI:13193"/>
        <dbReference type="ChEBI" id="CHEBI:15377"/>
        <dbReference type="ChEBI" id="CHEBI:15379"/>
        <dbReference type="ChEBI" id="CHEBI:17499"/>
        <dbReference type="ChEBI" id="CHEBI:30245"/>
        <dbReference type="ChEBI" id="CHEBI:77895"/>
    </reaction>
    <physiologicalReaction direction="left-to-right" evidence="1">
        <dbReference type="Rhea" id="RHEA:75448"/>
    </physiologicalReaction>
</comment>
<comment type="catalytic activity">
    <reaction evidence="1">
        <text>(9Z,12Z)-octadecadienoate + AH2 + O2 = (9S)-hydroxy-(10E,12Z)-octadecadienoate + A + H2O</text>
        <dbReference type="Rhea" id="RHEA:75459"/>
        <dbReference type="ChEBI" id="CHEBI:13193"/>
        <dbReference type="ChEBI" id="CHEBI:15377"/>
        <dbReference type="ChEBI" id="CHEBI:15379"/>
        <dbReference type="ChEBI" id="CHEBI:17499"/>
        <dbReference type="ChEBI" id="CHEBI:30245"/>
        <dbReference type="ChEBI" id="CHEBI:77852"/>
    </reaction>
    <physiologicalReaction direction="left-to-right" evidence="1">
        <dbReference type="Rhea" id="RHEA:75460"/>
    </physiologicalReaction>
</comment>
<comment type="catalytic activity">
    <reaction evidence="1">
        <text>(9Z,12Z)-octadecadienoate + AH2 + O2 = (13S)-hydroxy-(9Z,11E)-octadecadienoate + A + H2O</text>
        <dbReference type="Rhea" id="RHEA:75451"/>
        <dbReference type="ChEBI" id="CHEBI:13193"/>
        <dbReference type="ChEBI" id="CHEBI:15377"/>
        <dbReference type="ChEBI" id="CHEBI:15379"/>
        <dbReference type="ChEBI" id="CHEBI:17499"/>
        <dbReference type="ChEBI" id="CHEBI:30245"/>
        <dbReference type="ChEBI" id="CHEBI:90850"/>
    </reaction>
    <physiologicalReaction direction="left-to-right" evidence="1">
        <dbReference type="Rhea" id="RHEA:75452"/>
    </physiologicalReaction>
</comment>
<comment type="catalytic activity">
    <reaction evidence="1">
        <text>(9Z,12Z)-octadecadienoate + AH2 + O2 = (13R)-hydroxy-(9Z,11E)-octadecadienoate + A + H2O</text>
        <dbReference type="Rhea" id="RHEA:75455"/>
        <dbReference type="ChEBI" id="CHEBI:13193"/>
        <dbReference type="ChEBI" id="CHEBI:15377"/>
        <dbReference type="ChEBI" id="CHEBI:15379"/>
        <dbReference type="ChEBI" id="CHEBI:17499"/>
        <dbReference type="ChEBI" id="CHEBI:30245"/>
        <dbReference type="ChEBI" id="CHEBI:136655"/>
    </reaction>
    <physiologicalReaction direction="left-to-right" evidence="1">
        <dbReference type="Rhea" id="RHEA:75456"/>
    </physiologicalReaction>
</comment>
<comment type="cofactor">
    <cofactor evidence="18 19 21">
        <name>heme b</name>
        <dbReference type="ChEBI" id="CHEBI:60344"/>
    </cofactor>
    <text evidence="18 19 21">Binds 1 heme b (iron(II)-protoporphyrin IX) group per subunit.</text>
</comment>
<comment type="activity regulation">
    <text evidence="6 7 9 13 14 16 24">The cyclooxygenase activity is inhibited by nonsteroidal anti-inflammatory drugs (NSAIDs) including aspirin, ibuprofen, flurbiprofen, celecoxib, flufenamic, mefenamic and tolfenamic acids as well as by hydroperoxide scavenger erythrocyte glutathione peroxidase GPX1 (PubMed:26859324, PubMed:27226593, PubMed:7592599, PubMed:9048568). Aspirin triggers enzyme acetylation turning off its ability to generate pro-inflammatory prostaglandins, but switches on its capacity to produce anti-inflammatory lipid mediators involved in inflammation resolution (PubMed:11034610, PubMed:12391014). Aspirin enhances lipoxygenase-type activity toward production of epimers with R stereochemistry such as 15R-HETE, 18R-HEPE, 15R-HEPE and 17R-HDHA (PubMed:11034610, PubMed:11192938, PubMed:12391014, PubMed:21206090, PubMed:22068350, PubMed:9048568). Atorvastatin, a cholesterol-lowering drug, triggers enzyme S-nitrosylation increasing production of 13-series resolvins (RvTs) (PubMed:26236990).</text>
</comment>
<comment type="biophysicochemical properties">
    <kinetics>
        <KM evidence="11">16.2 uM for (5Z,8Z,11Z,14Z)-eicosatetraenoate (in absence of sodium nitroprusside NO donor)</KM>
        <KM evidence="18">12 uM for (5Z,8Z,11Z,14Z)-eicosatetraenoate</KM>
        <KM evidence="11">17 uM for (5Z,8Z,11Z,14Z)-eicosatetraenoate (in presence of sodium nitroprusside NO donor)</KM>
        <KM evidence="23">5.1 uM for (5Z,8Z,11Z,14Z)-eicosatetraenoate (cyclooxygenase and peroxidase activities)</KM>
        <KM evidence="16">3.1 uM for (7Z,10Z,13Z,16Z,19Z)-docosapentaenoate</KM>
        <KM evidence="24">0.93 uM for (5Z,8Z,11Z,14Z)-eicosatetraenoate (cyclooxygenase activity)</KM>
        <KM evidence="24">13 uM for (5Z,8Z,11Z,14Z)-eicosatetraenoate (cyclooxygenase activity in presence of aspirin)</KM>
        <KM evidence="24">41 uM for (5Z,8Z,11Z,14Z)-eicosatetraenoate (lipoxygenase activity)</KM>
        <KM evidence="24">15 uM for (5Z,8Z,11Z,14Z)-eicosatetraenoate (lipoxygenase activity in presence of aspirin)</KM>
        <KM evidence="20">12.3 uM for 2-(5Z,8Z,11Z,14Z)-eicosatetraenoyl-sn-glycero-3-phosphocholine (oxidation to 11-HETE-LPC)</KM>
        <KM evidence="20">30 uM for 2-(5Z,8Z,11Z,14Z)-eicosatetraenoyl-sn-glycero-3-phosphocholine (oxidation to 15-HETE-LPC)</KM>
        <Vmax evidence="11">81.3 nmol/min/mg enzyme (in absence of sodium nitroprusside NO donor)</Vmax>
        <Vmax evidence="11">132.0 nmol/min/mg enzyme (in absence of sodium nitroprusside NO donor)</Vmax>
    </kinetics>
</comment>
<comment type="pathway">
    <text evidence="18 19">Lipid metabolism; prostaglandin biosynthesis.</text>
</comment>
<comment type="subunit">
    <text evidence="18 19">Homodimer.</text>
</comment>
<comment type="interaction">
    <interactant intactId="EBI-6662113">
        <id>P35354</id>
    </interactant>
    <interactant intactId="EBI-11954292">
        <id>Q86V38</id>
        <label>ATN1</label>
    </interactant>
    <organismsDiffer>false</organismsDiffer>
    <experiments>3</experiments>
</comment>
<comment type="subcellular location">
    <subcellularLocation>
        <location evidence="26">Microsome membrane</location>
        <topology>Peripheral membrane protein</topology>
    </subcellularLocation>
    <subcellularLocation>
        <location evidence="26">Endoplasmic reticulum membrane</location>
        <topology>Peripheral membrane protein</topology>
    </subcellularLocation>
    <subcellularLocation>
        <location evidence="26">Nucleus inner membrane</location>
        <topology>Peripheral membrane protein</topology>
    </subcellularLocation>
    <subcellularLocation>
        <location evidence="26">Nucleus outer membrane</location>
        <topology>Peripheral membrane protein</topology>
    </subcellularLocation>
    <text evidence="26">Detected on the lumenal side of the endoplasmic reticulum and nuclear envelope.</text>
</comment>
<comment type="induction">
    <text evidence="17 26">By cytokines and mitogens. Up-regulated by IL1B (PubMed:26282205, PubMed:9545330). Up-regulated by lipopolysaccharide (LPS) (PubMed:9545330).</text>
</comment>
<comment type="PTM">
    <text evidence="11">S-nitrosylation by NOS2 (iNOS) activates enzyme activity. S-nitrosylation may take place on different Cys residues in addition to Cys-526.</text>
</comment>
<comment type="PTM">
    <text evidence="2">Acetylated at Ser-565 by SPHK1. During neuroinflammation, acetylation by SPHK1 promotes neuronal secretion of specialized preresolving mediators (SPMs), especially 15-R-lipoxin A4, which results in an increase of phagocytic microglia.</text>
</comment>
<comment type="miscellaneous">
    <text>The conversion of arachidonate to prostaglandin H2 is a 2 step reaction: a cyclooxygenase (COX) reaction which converts arachidonate to prostaglandin G2 (PGG2) and a peroxidase reaction in which PGG2 is reduced to prostaglandin H2 (PGH2). The cyclooxygenase reaction occurs in a hydrophobic channel in the core of the enzyme. The peroxidase reaction occurs at a heme-containing active site located near the protein surface. The nonsteroidal anti-inflammatory drugs (NSAIDs) binding site corresponds to the cyclooxygenase active site.</text>
</comment>
<comment type="miscellaneous">
    <text>Conversion of arachidonate to prostaglandin H2 is mediated by 2 different isozymes: the constitutive PTGS1 and the inducible PTGS2. PTGS1 is expressed constitutively and generally produces prostanoids acutely in response to hormonal stimuli to fine-tune physiological processes requiring instantaneous, continuous regulation (e.g. hemostasis). PTGS2 is inducible and typically produces prostanoids that mediate responses to physiological stresses such as infection and inflammation.</text>
</comment>
<comment type="miscellaneous">
    <text evidence="18 19 21">PTGS1 and PTGS2 are the targets of nonsteroidal anti-inflammatory drugs (NSAIDs) including aspirin and ibuprofen (PubMed:26859324, PubMed:27226593, PubMed:27710942). Aspirin is able to produce an irreversible inactivation of the enzyme through a serine acetylation (PubMed:26859324). Inhibition of the PGHSs with NSAIDs acutely reduces inflammation, pain, and fever, and long-term use of these drugs reduces fatal thrombotic events, as well as the development of colon cancer and Alzheimer's disease. PTGS2 is the principal isozyme responsible for production of inflammatory prostaglandins. New generation PTGSs inhibitors strive to be selective for PTGS2, to avoid side effects such as gastrointestinal complications and ulceration.</text>
</comment>
<comment type="similarity">
    <text evidence="30">Belongs to the prostaglandin G/H synthase family.</text>
</comment>
<comment type="online information" name="Atlas of Genetics and Cytogenetics in Oncology and Haematology">
    <link uri="https://atlasgeneticsoncology.org/gene/509/PTGS2"/>
</comment>
<feature type="signal peptide" evidence="3">
    <location>
        <begin position="1"/>
        <end position="17"/>
    </location>
</feature>
<feature type="chain" id="PRO_0000023875" description="Prostaglandin G/H synthase 2">
    <location>
        <begin position="18"/>
        <end position="604"/>
    </location>
</feature>
<feature type="domain" description="EGF-like" evidence="4">
    <location>
        <begin position="18"/>
        <end position="55"/>
    </location>
</feature>
<feature type="active site" description="Proton acceptor" evidence="5">
    <location>
        <position position="193"/>
    </location>
</feature>
<feature type="active site" description="For cyclooxygenase activity" evidence="2">
    <location>
        <position position="371"/>
    </location>
</feature>
<feature type="binding site" evidence="2">
    <location>
        <position position="106"/>
    </location>
    <ligand>
        <name>substrate</name>
    </ligand>
</feature>
<feature type="binding site" evidence="2">
    <location>
        <position position="341"/>
    </location>
    <ligand>
        <name>substrate</name>
    </ligand>
</feature>
<feature type="binding site" description="axial binding residue" evidence="5">
    <location>
        <position position="374"/>
    </location>
    <ligand>
        <name>heme b</name>
        <dbReference type="ChEBI" id="CHEBI:60344"/>
    </ligand>
    <ligandPart>
        <name>Fe</name>
        <dbReference type="ChEBI" id="CHEBI:18248"/>
    </ligandPart>
</feature>
<feature type="site" description="Aspirin-acetylated serine" evidence="18">
    <location>
        <position position="516"/>
    </location>
</feature>
<feature type="modified residue" description="S-nitrosocysteine" evidence="35">
    <location>
        <position position="526"/>
    </location>
</feature>
<feature type="modified residue" description="O-acetylserine" evidence="2">
    <location>
        <position position="565"/>
    </location>
</feature>
<feature type="glycosylation site" description="N-linked (GlcNAc...) asparagine" evidence="18 19 49 50 51 53">
    <location>
        <position position="53"/>
    </location>
</feature>
<feature type="glycosylation site" description="N-linked (GlcNAc...) asparagine" evidence="18 19 21 49 50 51 52 53 54 55">
    <location>
        <position position="130"/>
    </location>
</feature>
<feature type="glycosylation site" description="N-linked (GlcNAc...) asparagine" evidence="18 19 21 49 50 51 52 53 54 55">
    <location>
        <position position="396"/>
    </location>
</feature>
<feature type="glycosylation site" description="N-linked (GlcNAc...) asparagine" evidence="12">
    <location>
        <position position="580"/>
    </location>
</feature>
<feature type="disulfide bond" evidence="18 19 21 49 50 51 52 53 54 55">
    <location>
        <begin position="21"/>
        <end position="32"/>
    </location>
</feature>
<feature type="disulfide bond" evidence="18 19 21 49 50 51 52 53 54 55">
    <location>
        <begin position="22"/>
        <end position="145"/>
    </location>
</feature>
<feature type="disulfide bond" evidence="18 19 21 49 50 51 52 53 54 55">
    <location>
        <begin position="26"/>
        <end position="42"/>
    </location>
</feature>
<feature type="disulfide bond" evidence="18 19 21 49 50 51 52 53 54 55">
    <location>
        <begin position="44"/>
        <end position="54"/>
    </location>
</feature>
<feature type="disulfide bond" evidence="18 19 21 49 50 51 52 53 54 55">
    <location>
        <begin position="555"/>
        <end position="561"/>
    </location>
</feature>
<feature type="sequence variant" id="VAR_016262" description="In dbSNP:rs3218622." evidence="27">
    <original>R</original>
    <variation>H</variation>
    <location>
        <position position="228"/>
    </location>
</feature>
<feature type="sequence variant" id="VAR_016263" description="In dbSNP:rs4648279." evidence="27">
    <original>P</original>
    <variation>A</variation>
    <location>
        <position position="428"/>
    </location>
</feature>
<feature type="sequence variant" id="VAR_011980" description="In dbSNP:rs5272.">
    <original>E</original>
    <variation>G</variation>
    <location>
        <position position="488"/>
    </location>
</feature>
<feature type="sequence variant" id="VAR_011981" description="In dbSNP:rs5273." evidence="10 27">
    <original>V</original>
    <variation>A</variation>
    <location>
        <position position="511"/>
    </location>
</feature>
<feature type="sequence variant" id="VAR_016264" description="In dbSNP:rs3218625." evidence="27">
    <original>G</original>
    <variation>R</variation>
    <location>
        <position position="587"/>
    </location>
</feature>
<feature type="mutagenesis site" description="Increases two-electron hydroperoxide reduction. Has no effect on cyclooxygenase activity." evidence="25">
    <original>Q</original>
    <variation>N</variation>
    <location>
        <position position="189"/>
    </location>
</feature>
<feature type="mutagenesis site" description="Impairs two-electron hydroperoxide reduction and cyclooxygenase activity." evidence="25">
    <original>Q</original>
    <variation>R</variation>
    <location>
        <position position="189"/>
    </location>
</feature>
<feature type="mutagenesis site" description="Impairs two-electron hydroperoxide reduction." evidence="25">
    <original>Q</original>
    <variation>V</variation>
    <location>
        <position position="189"/>
    </location>
</feature>
<feature type="mutagenesis site" description="Reduces two-electron hydroperoxide reduction and cyclooxygenase activity. Catalyzes predominantly one-electron hydroperoxide reduction." evidence="25">
    <original>H</original>
    <variation>A</variation>
    <location>
        <position position="193"/>
    </location>
</feature>
<feature type="mutagenesis site" description="Decreased protein stability. Increased decrease of protein stability; when associated with A-516." evidence="19">
    <original>Y</original>
    <variation>A</variation>
    <location>
        <position position="371"/>
    </location>
</feature>
<feature type="mutagenesis site" description="No effect on protein stability. Increased decrease of protein stability; when associated with A-371." evidence="19">
    <original>S</original>
    <variation>A</variation>
    <location>
        <position position="516"/>
    </location>
</feature>
<feature type="mutagenesis site" description="Decreased enzyme activity with arachidonic acid. Loss of cyclooxygenase activity; when associated with V-519." evidence="18">
    <original>S</original>
    <variation>T</variation>
    <location>
        <position position="516"/>
    </location>
</feature>
<feature type="mutagenesis site" description="Loss of cyclooxygenase activity. Loss of cyclooxygenase activity; when associated with T-516." evidence="18">
    <original>G</original>
    <variation>V</variation>
    <location>
        <position position="519"/>
    </location>
</feature>
<feature type="mutagenesis site" description="Prevents activation by nitric oxid (NO)." evidence="11">
    <original>C</original>
    <variation>S</variation>
    <location>
        <position position="526"/>
    </location>
</feature>
<feature type="mutagenesis site" description="Abolishes enzyme activity." evidence="11">
    <original>C</original>
    <variation>S</variation>
    <location>
        <position position="555"/>
    </location>
</feature>
<feature type="mutagenesis site" description="Does not affect activation by nitric oxid (NO)." evidence="11">
    <original>C</original>
    <variation>S</variation>
    <location>
        <position position="561"/>
    </location>
</feature>
<feature type="sequence conflict" description="In Ref. 2; AAA58433." evidence="30" ref="2">
    <original>E</original>
    <variation>G</variation>
    <location>
        <position position="165"/>
    </location>
</feature>
<feature type="sequence conflict" description="In Ref. 1; AAA35803." evidence="30" ref="1">
    <original>I</original>
    <variation>T</variation>
    <location>
        <position position="438"/>
    </location>
</feature>
<feature type="turn" evidence="56">
    <location>
        <begin position="20"/>
        <end position="23"/>
    </location>
</feature>
<feature type="strand" evidence="56">
    <location>
        <begin position="31"/>
        <end position="35"/>
    </location>
</feature>
<feature type="turn" evidence="56">
    <location>
        <begin position="36"/>
        <end position="38"/>
    </location>
</feature>
<feature type="strand" evidence="56">
    <location>
        <begin position="39"/>
        <end position="43"/>
    </location>
</feature>
<feature type="strand" evidence="56">
    <location>
        <begin position="47"/>
        <end position="50"/>
    </location>
</feature>
<feature type="turn" evidence="56">
    <location>
        <begin position="51"/>
        <end position="54"/>
    </location>
</feature>
<feature type="helix" evidence="56">
    <location>
        <begin position="59"/>
        <end position="66"/>
    </location>
</feature>
<feature type="helix" evidence="56">
    <location>
        <begin position="71"/>
        <end position="78"/>
    </location>
</feature>
<feature type="helix" evidence="56">
    <location>
        <begin position="82"/>
        <end position="89"/>
    </location>
</feature>
<feature type="helix" evidence="56">
    <location>
        <begin position="92"/>
        <end position="107"/>
    </location>
</feature>
<feature type="strand" evidence="56">
    <location>
        <begin position="120"/>
        <end position="122"/>
    </location>
</feature>
<feature type="helix" evidence="56">
    <location>
        <begin position="125"/>
        <end position="129"/>
    </location>
</feature>
<feature type="strand" evidence="56">
    <location>
        <begin position="135"/>
        <end position="138"/>
    </location>
</feature>
<feature type="strand" evidence="56">
    <location>
        <begin position="150"/>
        <end position="153"/>
    </location>
</feature>
<feature type="helix" evidence="56">
    <location>
        <begin position="160"/>
        <end position="167"/>
    </location>
</feature>
<feature type="helix" evidence="56">
    <location>
        <begin position="182"/>
        <end position="192"/>
    </location>
</feature>
<feature type="turn" evidence="56">
    <location>
        <begin position="193"/>
        <end position="195"/>
    </location>
</feature>
<feature type="turn" evidence="56">
    <location>
        <begin position="200"/>
        <end position="202"/>
    </location>
</feature>
<feature type="strand" evidence="56">
    <location>
        <begin position="206"/>
        <end position="208"/>
    </location>
</feature>
<feature type="helix" evidence="56">
    <location>
        <begin position="217"/>
        <end position="220"/>
    </location>
</feature>
<feature type="helix" evidence="56">
    <location>
        <begin position="224"/>
        <end position="230"/>
    </location>
</feature>
<feature type="strand" evidence="56">
    <location>
        <begin position="241"/>
        <end position="243"/>
    </location>
</feature>
<feature type="strand" evidence="56">
    <location>
        <begin position="246"/>
        <end position="248"/>
    </location>
</feature>
<feature type="helix" evidence="56">
    <location>
        <begin position="252"/>
        <end position="255"/>
    </location>
</feature>
<feature type="helix" evidence="56">
    <location>
        <begin position="267"/>
        <end position="269"/>
    </location>
</feature>
<feature type="turn" evidence="56">
    <location>
        <begin position="276"/>
        <end position="279"/>
    </location>
</feature>
<feature type="helix" evidence="56">
    <location>
        <begin position="282"/>
        <end position="305"/>
    </location>
</feature>
<feature type="helix" evidence="56">
    <location>
        <begin position="311"/>
        <end position="332"/>
    </location>
</feature>
<feature type="helix" evidence="56">
    <location>
        <begin position="334"/>
        <end position="339"/>
    </location>
</feature>
<feature type="helix" evidence="56">
    <location>
        <begin position="349"/>
        <end position="352"/>
    </location>
</feature>
<feature type="helix" evidence="56">
    <location>
        <begin position="365"/>
        <end position="370"/>
    </location>
</feature>
<feature type="helix" evidence="56">
    <location>
        <begin position="374"/>
        <end position="376"/>
    </location>
</feature>
<feature type="strand" evidence="56">
    <location>
        <begin position="379"/>
        <end position="383"/>
    </location>
</feature>
<feature type="strand" evidence="56">
    <location>
        <begin position="386"/>
        <end position="388"/>
    </location>
</feature>
<feature type="helix" evidence="56">
    <location>
        <begin position="390"/>
        <end position="393"/>
    </location>
</feature>
<feature type="helix" evidence="56">
    <location>
        <begin position="398"/>
        <end position="414"/>
    </location>
</feature>
<feature type="strand" evidence="56">
    <location>
        <begin position="420"/>
        <end position="424"/>
    </location>
</feature>
<feature type="helix" evidence="56">
    <location>
        <begin position="428"/>
        <end position="430"/>
    </location>
</feature>
<feature type="helix" evidence="56">
    <location>
        <begin position="431"/>
        <end position="443"/>
    </location>
</feature>
<feature type="helix" evidence="56">
    <location>
        <begin position="449"/>
        <end position="455"/>
    </location>
</feature>
<feature type="helix" evidence="56">
    <location>
        <begin position="464"/>
        <end position="468"/>
    </location>
</feature>
<feature type="strand" evidence="56">
    <location>
        <begin position="469"/>
        <end position="471"/>
    </location>
</feature>
<feature type="helix" evidence="56">
    <location>
        <begin position="472"/>
        <end position="481"/>
    </location>
</feature>
<feature type="helix" evidence="56">
    <location>
        <begin position="484"/>
        <end position="486"/>
    </location>
</feature>
<feature type="helix" evidence="56">
    <location>
        <begin position="489"/>
        <end position="495"/>
    </location>
</feature>
<feature type="strand" evidence="56">
    <location>
        <begin position="503"/>
        <end position="505"/>
    </location>
</feature>
<feature type="helix" evidence="56">
    <location>
        <begin position="506"/>
        <end position="521"/>
    </location>
</feature>
<feature type="helix" evidence="56">
    <location>
        <begin position="524"/>
        <end position="526"/>
    </location>
</feature>
<feature type="turn" evidence="56">
    <location>
        <begin position="528"/>
        <end position="530"/>
    </location>
</feature>
<feature type="helix" evidence="56">
    <location>
        <begin position="533"/>
        <end position="536"/>
    </location>
</feature>
<feature type="helix" evidence="56">
    <location>
        <begin position="539"/>
        <end position="546"/>
    </location>
</feature>
<feature type="helix" evidence="56">
    <location>
        <begin position="550"/>
        <end position="557"/>
    </location>
</feature>
<protein>
    <recommendedName>
        <fullName evidence="30">Prostaglandin G/H synthase 2</fullName>
        <ecNumber evidence="11 18 19">1.14.99.1</ecNumber>
    </recommendedName>
    <alternativeName>
        <fullName evidence="28">Cyclooxygenase-2</fullName>
        <shortName evidence="28">COX-2</shortName>
    </alternativeName>
    <alternativeName>
        <fullName>PHS II</fullName>
    </alternativeName>
    <alternativeName>
        <fullName>Prostaglandin H2 synthase 2</fullName>
        <shortName>PGH synthase 2</shortName>
        <shortName>PGHS-2</shortName>
    </alternativeName>
    <alternativeName>
        <fullName>Prostaglandin-endoperoxide synthase 2</fullName>
    </alternativeName>
</protein>
<dbReference type="EC" id="1.14.99.1" evidence="11 18 19"/>
<dbReference type="EMBL" id="L15326">
    <property type="protein sequence ID" value="AAA35803.1"/>
    <property type="molecule type" value="mRNA"/>
</dbReference>
<dbReference type="EMBL" id="M90100">
    <property type="protein sequence ID" value="AAA58433.1"/>
    <property type="molecule type" value="mRNA"/>
</dbReference>
<dbReference type="EMBL" id="D28235">
    <property type="protein sequence ID" value="BAA05698.1"/>
    <property type="molecule type" value="Genomic_DNA"/>
</dbReference>
<dbReference type="EMBL" id="U04636">
    <property type="protein sequence ID" value="AAA57317.1"/>
    <property type="molecule type" value="Genomic_DNA"/>
</dbReference>
<dbReference type="EMBL" id="AY462100">
    <property type="protein sequence ID" value="AAR23927.1"/>
    <property type="molecule type" value="mRNA"/>
</dbReference>
<dbReference type="EMBL" id="AY229989">
    <property type="protein sequence ID" value="AAO38056.1"/>
    <property type="molecule type" value="Genomic_DNA"/>
</dbReference>
<dbReference type="EMBL" id="AY382629">
    <property type="protein sequence ID" value="AAQ75702.1"/>
    <property type="molecule type" value="Genomic_DNA"/>
</dbReference>
<dbReference type="EMBL" id="AK292167">
    <property type="protein sequence ID" value="BAF84856.1"/>
    <property type="molecule type" value="mRNA"/>
</dbReference>
<dbReference type="EMBL" id="AL033533">
    <property type="status" value="NOT_ANNOTATED_CDS"/>
    <property type="molecule type" value="Genomic_DNA"/>
</dbReference>
<dbReference type="EMBL" id="CH471067">
    <property type="protein sequence ID" value="EAW91216.1"/>
    <property type="molecule type" value="Genomic_DNA"/>
</dbReference>
<dbReference type="EMBL" id="BC013734">
    <property type="protein sequence ID" value="AAH13734.1"/>
    <property type="molecule type" value="mRNA"/>
</dbReference>
<dbReference type="CCDS" id="CCDS1371.1"/>
<dbReference type="PIR" id="A46150">
    <property type="entry name" value="A46150"/>
</dbReference>
<dbReference type="RefSeq" id="NP_000954.1">
    <property type="nucleotide sequence ID" value="NM_000963.4"/>
</dbReference>
<dbReference type="PDB" id="5F19">
    <property type="method" value="X-ray"/>
    <property type="resolution" value="2.04 A"/>
    <property type="chains" value="A/B=19-569"/>
</dbReference>
<dbReference type="PDB" id="5F1A">
    <property type="method" value="X-ray"/>
    <property type="resolution" value="2.38 A"/>
    <property type="chains" value="A/B=19-570"/>
</dbReference>
<dbReference type="PDB" id="5IKQ">
    <property type="method" value="X-ray"/>
    <property type="resolution" value="2.41 A"/>
    <property type="chains" value="A/B=19-569"/>
</dbReference>
<dbReference type="PDB" id="5IKR">
    <property type="method" value="X-ray"/>
    <property type="resolution" value="2.34 A"/>
    <property type="chains" value="A/B=19-569"/>
</dbReference>
<dbReference type="PDB" id="5IKT">
    <property type="method" value="X-ray"/>
    <property type="resolution" value="2.45 A"/>
    <property type="chains" value="A/B=19-569"/>
</dbReference>
<dbReference type="PDB" id="5IKV">
    <property type="method" value="X-ray"/>
    <property type="resolution" value="2.51 A"/>
    <property type="chains" value="A/B=19-569"/>
</dbReference>
<dbReference type="PDB" id="5KIR">
    <property type="method" value="X-ray"/>
    <property type="resolution" value="2.70 A"/>
    <property type="chains" value="A/B=19-569"/>
</dbReference>
<dbReference type="PDBsum" id="5F19"/>
<dbReference type="PDBsum" id="5F1A"/>
<dbReference type="PDBsum" id="5IKQ"/>
<dbReference type="PDBsum" id="5IKR"/>
<dbReference type="PDBsum" id="5IKT"/>
<dbReference type="PDBsum" id="5IKV"/>
<dbReference type="PDBsum" id="5KIR"/>
<dbReference type="SMR" id="P35354"/>
<dbReference type="BioGRID" id="111715">
    <property type="interactions" value="50"/>
</dbReference>
<dbReference type="CORUM" id="P35354"/>
<dbReference type="DIP" id="DIP-28131N"/>
<dbReference type="FunCoup" id="P35354">
    <property type="interactions" value="1162"/>
</dbReference>
<dbReference type="IntAct" id="P35354">
    <property type="interactions" value="8"/>
</dbReference>
<dbReference type="MINT" id="P35354"/>
<dbReference type="STRING" id="9606.ENSP00000356438"/>
<dbReference type="BindingDB" id="P35354"/>
<dbReference type="ChEMBL" id="CHEMBL230"/>
<dbReference type="DrugBank" id="DB03477">
    <property type="generic name" value="1-Phenylsulfonamide-3-Trifluoromethyl-5-Parabromophenylpyrazole"/>
</dbReference>
<dbReference type="DrugBank" id="DB06736">
    <property type="generic name" value="Aceclofenac"/>
</dbReference>
<dbReference type="DrugBank" id="DB13783">
    <property type="generic name" value="Acemetacin"/>
</dbReference>
<dbReference type="DrugBank" id="DB00316">
    <property type="generic name" value="Acetaminophen"/>
</dbReference>
<dbReference type="DrugBank" id="DB00945">
    <property type="generic name" value="Acetylsalicylic acid"/>
</dbReference>
<dbReference type="DrugBank" id="DB13167">
    <property type="generic name" value="Alclofenac"/>
</dbReference>
<dbReference type="DrugBank" id="DB00041">
    <property type="generic name" value="Aldesleukin"/>
</dbReference>
<dbReference type="DrugBank" id="DB00132">
    <property type="generic name" value="alpha-Linolenic acid"/>
</dbReference>
<dbReference type="DrugBank" id="DB00233">
    <property type="generic name" value="Aminosalicylic acid"/>
</dbReference>
<dbReference type="DrugBank" id="DB16877">
    <property type="generic name" value="Ampiroxicam"/>
</dbReference>
<dbReference type="DrugBank" id="DB01435">
    <property type="generic name" value="Antipyrine"/>
</dbReference>
<dbReference type="DrugBank" id="DB01419">
    <property type="generic name" value="Antrafenine"/>
</dbReference>
<dbReference type="DrugBank" id="DB12378">
    <property type="generic name" value="Apricoxib"/>
</dbReference>
<dbReference type="DrugBank" id="DB01014">
    <property type="generic name" value="Balsalazide"/>
</dbReference>
<dbReference type="DrugBank" id="DB13501">
    <property type="generic name" value="Bendazac"/>
</dbReference>
<dbReference type="DrugBank" id="DB09084">
    <property type="generic name" value="Benzydamine"/>
</dbReference>
<dbReference type="DrugBank" id="DB00963">
    <property type="generic name" value="Bromfenac"/>
</dbReference>
<dbReference type="DrugBank" id="DB11752">
    <property type="generic name" value="Bryostatin 1"/>
</dbReference>
<dbReference type="DrugBank" id="DB13346">
    <property type="generic name" value="Bufexamac"/>
</dbReference>
<dbReference type="DrugBank" id="DB00887">
    <property type="generic name" value="Bumetanide"/>
</dbReference>
<dbReference type="DrugBank" id="DB09061">
    <property type="generic name" value="Cannabidiol"/>
</dbReference>
<dbReference type="DrugBank" id="DB06774">
    <property type="generic name" value="Capsaicin"/>
</dbReference>
<dbReference type="DrugBank" id="DB00821">
    <property type="generic name" value="Carprofen"/>
</dbReference>
<dbReference type="DrugBank" id="DB00482">
    <property type="generic name" value="Celecoxib"/>
</dbReference>
<dbReference type="DrugBank" id="DB00856">
    <property type="generic name" value="Chlorphenesin"/>
</dbReference>
<dbReference type="DrugBank" id="DB01401">
    <property type="generic name" value="Choline magnesium trisalicylate"/>
</dbReference>
<dbReference type="DrugBank" id="DB05095">
    <property type="generic name" value="Cimicoxib"/>
</dbReference>
<dbReference type="DrugBank" id="DB00515">
    <property type="generic name" value="Cisplatin"/>
</dbReference>
<dbReference type="DrugBank" id="DB00720">
    <property type="generic name" value="Clodronic acid"/>
</dbReference>
<dbReference type="DrugBank" id="DB11672">
    <property type="generic name" value="Curcumin"/>
</dbReference>
<dbReference type="DrugBank" id="DB00250">
    <property type="generic name" value="Dapsone"/>
</dbReference>
<dbReference type="DrugBank" id="DB00035">
    <property type="generic name" value="Desmopressin"/>
</dbReference>
<dbReference type="DrugBank" id="DB09213">
    <property type="generic name" value="Dexibuprofen"/>
</dbReference>
<dbReference type="DrugBank" id="DB09214">
    <property type="generic name" value="Dexketoprofen"/>
</dbReference>
<dbReference type="DrugBank" id="DB00586">
    <property type="generic name" value="Diclofenac"/>
</dbReference>
<dbReference type="DrugBank" id="DB00861">
    <property type="generic name" value="Diflunisal"/>
</dbReference>
<dbReference type="DrugBank" id="DB00154">
    <property type="generic name" value="Dihomo-gamma-linolenic acid"/>
</dbReference>
<dbReference type="DrugBank" id="DB11327">
    <property type="generic name" value="Dipyrithione"/>
</dbReference>
<dbReference type="DrugBank" id="DB03756">
    <property type="generic name" value="Doconexent"/>
</dbReference>
<dbReference type="DrugBank" id="DB01395">
    <property type="generic name" value="Drospirenone"/>
</dbReference>
<dbReference type="DrugBank" id="DB09215">
    <property type="generic name" value="Droxicam"/>
</dbReference>
<dbReference type="DrugBank" id="DB16159">
    <property type="generic name" value="Esflurbiprofen"/>
</dbReference>
<dbReference type="DrugBank" id="DB00749">
    <property type="generic name" value="Etodolac"/>
</dbReference>
<dbReference type="DrugBank" id="DB00773">
    <property type="generic name" value="Etoposide"/>
</dbReference>
<dbReference type="DrugBank" id="DB01628">
    <property type="generic name" value="Etoricoxib"/>
</dbReference>
<dbReference type="DrugBank" id="DB07477">
    <property type="generic name" value="Felbinac"/>
</dbReference>
<dbReference type="DrugBank" id="DB08981">
    <property type="generic name" value="Fenbufen"/>
</dbReference>
<dbReference type="DrugBank" id="DB00573">
    <property type="generic name" value="Fenoprofen"/>
</dbReference>
<dbReference type="DrugBank" id="DB18267">
    <property type="generic name" value="Ferroheme"/>
</dbReference>
<dbReference type="DrugBank" id="DB09217">
    <property type="generic name" value="Firocoxib"/>
</dbReference>
<dbReference type="DrugBank" id="DB13961">
    <property type="generic name" value="Fish oil"/>
</dbReference>
<dbReference type="DrugBank" id="DB02266">
    <property type="generic name" value="Flufenamic acid"/>
</dbReference>
<dbReference type="DrugBank" id="DB00712">
    <property type="generic name" value="Flurbiprofen"/>
</dbReference>
<dbReference type="DrugBank" id="DB01404">
    <property type="generic name" value="Ginseng"/>
</dbReference>
<dbReference type="DrugBank" id="DB11323">
    <property type="generic name" value="Glycol salicylate"/>
</dbReference>
<dbReference type="DrugBank" id="DB12009">
    <property type="generic name" value="GW-406381"/>
</dbReference>
<dbReference type="DrugBank" id="DB19283">
    <property type="generic name" value="Honokiol"/>
</dbReference>
<dbReference type="DrugBank" id="DB01050">
    <property type="generic name" value="Ibuprofen"/>
</dbReference>
<dbReference type="DrugBank" id="DB00159">
    <property type="generic name" value="Icosapent"/>
</dbReference>
<dbReference type="DrugBank" id="DB12354">
    <property type="generic name" value="Imrecoxib"/>
</dbReference>
<dbReference type="DrugBank" id="DB00328">
    <property type="generic name" value="Indomethacin"/>
</dbReference>
<dbReference type="DrugBank" id="DB08951">
    <property type="generic name" value="Indoprofen"/>
</dbReference>
<dbReference type="DrugBank" id="DB01009">
    <property type="generic name" value="Ketoprofen"/>
</dbReference>
<dbReference type="DrugBank" id="DB00465">
    <property type="generic name" value="Ketorolac"/>
</dbReference>
<dbReference type="DrugBank" id="DB00480">
    <property type="generic name" value="Lenalidomide"/>
</dbReference>
<dbReference type="DrugBank" id="DB04725">
    <property type="generic name" value="Licofelone"/>
</dbReference>
<dbReference type="DrugBank" id="DB06725">
    <property type="generic name" value="Lornoxicam"/>
</dbReference>
<dbReference type="DrugBank" id="DB09212">
    <property type="generic name" value="Loxoprofen"/>
</dbReference>
<dbReference type="DrugBank" id="DB01283">
    <property type="generic name" value="Lumiracoxib"/>
</dbReference>
<dbReference type="DrugBank" id="DB01397">
    <property type="generic name" value="Magnesium salicylate"/>
</dbReference>
<dbReference type="DrugBank" id="DB00939">
    <property type="generic name" value="Meclofenamic acid"/>
</dbReference>
<dbReference type="DrugBank" id="DB14009">
    <property type="generic name" value="Medical Cannabis"/>
</dbReference>
<dbReference type="DrugBank" id="DB00784">
    <property type="generic name" value="Mefenamic acid"/>
</dbReference>
<dbReference type="DrugBank" id="DB00814">
    <property type="generic name" value="Meloxicam"/>
</dbReference>
<dbReference type="DrugBank" id="DB11201">
    <property type="generic name" value="Menthyl salicylate"/>
</dbReference>
<dbReference type="DrugBank" id="DB00244">
    <property type="generic name" value="Mesalazine"/>
</dbReference>
<dbReference type="DrugBank" id="DB09285">
    <property type="generic name" value="Morniflumate"/>
</dbReference>
<dbReference type="DrugBank" id="DB14011">
    <property type="generic name" value="Nabiximols"/>
</dbReference>
<dbReference type="DrugBank" id="DB00461">
    <property type="generic name" value="Nabumetone"/>
</dbReference>
<dbReference type="DrugBank" id="DB06682">
    <property type="generic name" value="Naproxcinod"/>
</dbReference>
<dbReference type="DrugBank" id="DB00788">
    <property type="generic name" value="Naproxen"/>
</dbReference>
<dbReference type="DrugBank" id="DB05409">
    <property type="generic name" value="NCX 701"/>
</dbReference>
<dbReference type="DrugBank" id="DB06802">
    <property type="generic name" value="Nepafenac"/>
</dbReference>
<dbReference type="DrugBank" id="DB04552">
    <property type="generic name" value="Niflumic acid"/>
</dbReference>
<dbReference type="DrugBank" id="DB04743">
    <property type="generic name" value="Nimesulide"/>
</dbReference>
<dbReference type="DrugBank" id="DB12445">
    <property type="generic name" value="Nitroaspirin"/>
</dbReference>
<dbReference type="DrugBank" id="DB06804">
    <property type="generic name" value="Nonoxynol-9"/>
</dbReference>
<dbReference type="DrugBank" id="DB14060">
    <property type="generic name" value="NS-398"/>
</dbReference>
<dbReference type="DrugBank" id="DB01250">
    <property type="generic name" value="Olsalazine"/>
</dbReference>
<dbReference type="DrugBank" id="DB11133">
    <property type="generic name" value="Omega-3 fatty acids"/>
</dbReference>
<dbReference type="DrugBank" id="DB13168">
    <property type="generic name" value="Omega-6 fatty acids"/>
</dbReference>
<dbReference type="DrugBank" id="DB13308">
    <property type="generic name" value="Oxametacin"/>
</dbReference>
<dbReference type="DrugBank" id="DB00991">
    <property type="generic name" value="Oxaprozin"/>
</dbReference>
<dbReference type="DrugBank" id="DB08439">
    <property type="generic name" value="Parecoxib"/>
</dbReference>
<dbReference type="DrugBank" id="DB12150">
    <property type="generic name" value="Pelubiprofen"/>
</dbReference>
<dbReference type="DrugBank" id="DB11071">
    <property type="generic name" value="Phenyl salicylate"/>
</dbReference>
<dbReference type="DrugBank" id="DB00812">
    <property type="generic name" value="Phenylbutazone"/>
</dbReference>
<dbReference type="DrugBank" id="DB00554">
    <property type="generic name" value="Piroxicam"/>
</dbReference>
<dbReference type="DrugBank" id="DB12399">
    <property type="generic name" value="Polmacoxib"/>
</dbReference>
<dbReference type="DrugBank" id="DB08910">
    <property type="generic name" value="Pomalidomide"/>
</dbReference>
<dbReference type="DrugBank" id="DB13514">
    <property type="generic name" value="Pranoprofen"/>
</dbReference>
<dbReference type="DrugBank" id="DB05804">
    <property type="generic name" value="Prasterone sulfate"/>
</dbReference>
<dbReference type="DrugBank" id="DB09288">
    <property type="generic name" value="Propacetamol"/>
</dbReference>
<dbReference type="DrugBank" id="DB03866">
    <property type="generic name" value="Prostaglandin G2"/>
</dbReference>
<dbReference type="DrugBank" id="DB02709">
    <property type="generic name" value="Resveratrol"/>
</dbReference>
<dbReference type="DrugBank" id="DB00884">
    <property type="generic name" value="Risedronic acid"/>
</dbReference>
<dbReference type="DrugBank" id="DB00533">
    <property type="generic name" value="Rofecoxib"/>
</dbReference>
<dbReference type="DrugBank" id="DB00936">
    <property type="generic name" value="Salicylic acid"/>
</dbReference>
<dbReference type="DrugBank" id="DB01399">
    <property type="generic name" value="Salsalate"/>
</dbReference>
<dbReference type="DrugBank" id="DB00360">
    <property type="generic name" value="Sapropterin"/>
</dbReference>
<dbReference type="DrugBank" id="DB05875">
    <property type="generic name" value="Sar9, Met (O2)11-Substance P"/>
</dbReference>
<dbReference type="DrugBank" id="DB14059">
    <property type="generic name" value="SC-236"/>
</dbReference>
<dbReference type="DrugBank" id="DB06195">
    <property type="generic name" value="Seliciclib"/>
</dbReference>
<dbReference type="DrugBank" id="DB06436">
    <property type="generic name" value="Semaxanib"/>
</dbReference>
<dbReference type="DrugBank" id="DB00795">
    <property type="generic name" value="Sulfasalazine"/>
</dbReference>
<dbReference type="DrugBank" id="DB00605">
    <property type="generic name" value="Sulindac"/>
</dbReference>
<dbReference type="DrugBank" id="DB00870">
    <property type="generic name" value="Suprofen"/>
</dbReference>
<dbReference type="DrugBank" id="DB08819">
    <property type="generic name" value="Tafluprost"/>
</dbReference>
<dbReference type="DrugBank" id="DB09295">
    <property type="generic name" value="Talniflumate"/>
</dbReference>
<dbReference type="DrugBank" id="DB00469">
    <property type="generic name" value="Tenoxicam"/>
</dbReference>
<dbReference type="DrugBank" id="DB01041">
    <property type="generic name" value="Thalidomide"/>
</dbReference>
<dbReference type="DrugBank" id="DB01600">
    <property type="generic name" value="Tiaprofenic acid"/>
</dbReference>
<dbReference type="DrugBank" id="DB09216">
    <property type="generic name" value="Tolfenamic acid"/>
</dbReference>
<dbReference type="DrugBank" id="DB00500">
    <property type="generic name" value="Tolmetin"/>
</dbReference>
<dbReference type="DrugBank" id="DB00620">
    <property type="generic name" value="Triamcinolone"/>
</dbReference>
<dbReference type="DrugBank" id="DB11079">
    <property type="generic name" value="Trolamine salicylate"/>
</dbReference>
<dbReference type="DrugBank" id="DB00580">
    <property type="generic name" value="Valdecoxib"/>
</dbReference>
<dbReference type="DrugBank" id="DB04828">
    <property type="generic name" value="Zomepirac"/>
</dbReference>
<dbReference type="DrugCentral" id="P35354"/>
<dbReference type="GuidetoPHARMACOLOGY" id="1376"/>
<dbReference type="SwissLipids" id="SLP:000000830"/>
<dbReference type="PeroxiBase" id="3321">
    <property type="entry name" value="HsPGHS02"/>
</dbReference>
<dbReference type="GlyConnect" id="1649">
    <property type="glycosylation" value="9 N-Linked glycans (3 sites)"/>
</dbReference>
<dbReference type="GlyCosmos" id="P35354">
    <property type="glycosylation" value="4 sites, 11 glycans"/>
</dbReference>
<dbReference type="GlyGen" id="P35354">
    <property type="glycosylation" value="10 sites, 16 N-linked glycans (3 sites)"/>
</dbReference>
<dbReference type="iPTMnet" id="P35354"/>
<dbReference type="PhosphoSitePlus" id="P35354"/>
<dbReference type="SwissPalm" id="P35354"/>
<dbReference type="BioMuta" id="PTGS2"/>
<dbReference type="DMDM" id="3915797"/>
<dbReference type="CPTAC" id="CPTAC-5960"/>
<dbReference type="jPOST" id="P35354"/>
<dbReference type="MassIVE" id="P35354"/>
<dbReference type="PaxDb" id="9606-ENSP00000356438"/>
<dbReference type="PeptideAtlas" id="P35354"/>
<dbReference type="ProteomicsDB" id="55035"/>
<dbReference type="Pumba" id="P35354"/>
<dbReference type="Antibodypedia" id="776">
    <property type="antibodies" value="1074 antibodies from 48 providers"/>
</dbReference>
<dbReference type="CPTC" id="P35354">
    <property type="antibodies" value="1 antibody"/>
</dbReference>
<dbReference type="DNASU" id="5743"/>
<dbReference type="Ensembl" id="ENST00000367468.10">
    <property type="protein sequence ID" value="ENSP00000356438.5"/>
    <property type="gene ID" value="ENSG00000073756.13"/>
</dbReference>
<dbReference type="Ensembl" id="ENST00000680451.1">
    <property type="protein sequence ID" value="ENSP00000506242.1"/>
    <property type="gene ID" value="ENSG00000073756.13"/>
</dbReference>
<dbReference type="GeneID" id="5743"/>
<dbReference type="KEGG" id="hsa:5743"/>
<dbReference type="MANE-Select" id="ENST00000367468.10">
    <property type="protein sequence ID" value="ENSP00000356438.5"/>
    <property type="RefSeq nucleotide sequence ID" value="NM_000963.4"/>
    <property type="RefSeq protein sequence ID" value="NP_000954.1"/>
</dbReference>
<dbReference type="UCSC" id="uc001gsb.4">
    <property type="organism name" value="human"/>
</dbReference>
<dbReference type="AGR" id="HGNC:9605"/>
<dbReference type="CTD" id="5743"/>
<dbReference type="DisGeNET" id="5743"/>
<dbReference type="GeneCards" id="PTGS2"/>
<dbReference type="HGNC" id="HGNC:9605">
    <property type="gene designation" value="PTGS2"/>
</dbReference>
<dbReference type="HPA" id="ENSG00000073756">
    <property type="expression patterns" value="Tissue enhanced (bone marrow, seminal vesicle, urinary bladder)"/>
</dbReference>
<dbReference type="MIM" id="600262">
    <property type="type" value="gene"/>
</dbReference>
<dbReference type="neXtProt" id="NX_P35354"/>
<dbReference type="OpenTargets" id="ENSG00000073756"/>
<dbReference type="PharmGKB" id="PA293"/>
<dbReference type="VEuPathDB" id="HostDB:ENSG00000073756"/>
<dbReference type="eggNOG" id="KOG2408">
    <property type="taxonomic scope" value="Eukaryota"/>
</dbReference>
<dbReference type="GeneTree" id="ENSGT00390000010743"/>
<dbReference type="HOGENOM" id="CLU_022428_0_0_1"/>
<dbReference type="InParanoid" id="P35354"/>
<dbReference type="OMA" id="MIYPPHI"/>
<dbReference type="OrthoDB" id="823504at2759"/>
<dbReference type="PAN-GO" id="P35354">
    <property type="GO annotations" value="5 GO annotations based on evolutionary models"/>
</dbReference>
<dbReference type="PhylomeDB" id="P35354"/>
<dbReference type="TreeFam" id="TF329675"/>
<dbReference type="BioCyc" id="MetaCyc:HS01115-MONOMER"/>
<dbReference type="BRENDA" id="1.14.99.1">
    <property type="organism ID" value="2681"/>
</dbReference>
<dbReference type="PathwayCommons" id="P35354"/>
<dbReference type="Reactome" id="R-HSA-197264">
    <property type="pathway name" value="Nicotinamide salvaging"/>
</dbReference>
<dbReference type="Reactome" id="R-HSA-2142770">
    <property type="pathway name" value="Synthesis of 15-eicosatetraenoic acid derivatives"/>
</dbReference>
<dbReference type="Reactome" id="R-HSA-2162123">
    <property type="pathway name" value="Synthesis of Prostaglandins (PG) and Thromboxanes (TX)"/>
</dbReference>
<dbReference type="Reactome" id="R-HSA-6783783">
    <property type="pathway name" value="Interleukin-10 signaling"/>
</dbReference>
<dbReference type="Reactome" id="R-HSA-6785807">
    <property type="pathway name" value="Interleukin-4 and Interleukin-13 signaling"/>
</dbReference>
<dbReference type="Reactome" id="R-HSA-9018677">
    <property type="pathway name" value="Biosynthesis of DHA-derived SPMs"/>
</dbReference>
<dbReference type="Reactome" id="R-HSA-9018679">
    <property type="pathway name" value="Biosynthesis of EPA-derived SPMs"/>
</dbReference>
<dbReference type="Reactome" id="R-HSA-9025094">
    <property type="pathway name" value="Biosynthesis of DPAn-3 SPMs"/>
</dbReference>
<dbReference type="Reactome" id="R-HSA-9027604">
    <property type="pathway name" value="Biosynthesis of electrophilic Omega-3 PUFA oxo-derivatives"/>
</dbReference>
<dbReference type="SABIO-RK" id="P35354"/>
<dbReference type="SignaLink" id="P35354"/>
<dbReference type="SIGNOR" id="P35354"/>
<dbReference type="UniPathway" id="UPA00662"/>
<dbReference type="BioGRID-ORCS" id="5743">
    <property type="hits" value="3 hits in 1160 CRISPR screens"/>
</dbReference>
<dbReference type="ChiTaRS" id="PTGS2">
    <property type="organism name" value="human"/>
</dbReference>
<dbReference type="EvolutionaryTrace" id="P35354"/>
<dbReference type="GeneWiki" id="Prostaglandin-endoperoxide_synthase_2"/>
<dbReference type="GeneWiki" id="PTGS2"/>
<dbReference type="GenomeRNAi" id="5743"/>
<dbReference type="Pharos" id="P35354">
    <property type="development level" value="Tclin"/>
</dbReference>
<dbReference type="PRO" id="PR:P35354"/>
<dbReference type="Proteomes" id="UP000005640">
    <property type="component" value="Chromosome 1"/>
</dbReference>
<dbReference type="RNAct" id="P35354">
    <property type="molecule type" value="protein"/>
</dbReference>
<dbReference type="Bgee" id="ENSG00000073756">
    <property type="expression patterns" value="Expressed in seminal vesicle and 175 other cell types or tissues"/>
</dbReference>
<dbReference type="ExpressionAtlas" id="P35354">
    <property type="expression patterns" value="baseline and differential"/>
</dbReference>
<dbReference type="GO" id="GO:0005737">
    <property type="term" value="C:cytoplasm"/>
    <property type="evidence" value="ECO:0000314"/>
    <property type="project" value="UniProtKB"/>
</dbReference>
<dbReference type="GO" id="GO:0005829">
    <property type="term" value="C:cytosol"/>
    <property type="evidence" value="ECO:0000314"/>
    <property type="project" value="HPA"/>
</dbReference>
<dbReference type="GO" id="GO:0005783">
    <property type="term" value="C:endoplasmic reticulum"/>
    <property type="evidence" value="ECO:0000314"/>
    <property type="project" value="ParkinsonsUK-UCL"/>
</dbReference>
<dbReference type="GO" id="GO:0005788">
    <property type="term" value="C:endoplasmic reticulum lumen"/>
    <property type="evidence" value="ECO:0000304"/>
    <property type="project" value="ParkinsonsUK-UCL"/>
</dbReference>
<dbReference type="GO" id="GO:0005789">
    <property type="term" value="C:endoplasmic reticulum membrane"/>
    <property type="evidence" value="ECO:0000304"/>
    <property type="project" value="Reactome"/>
</dbReference>
<dbReference type="GO" id="GO:0043231">
    <property type="term" value="C:intracellular membrane-bounded organelle"/>
    <property type="evidence" value="ECO:0000314"/>
    <property type="project" value="HPA"/>
</dbReference>
<dbReference type="GO" id="GO:0043005">
    <property type="term" value="C:neuron projection"/>
    <property type="evidence" value="ECO:0000314"/>
    <property type="project" value="MGI"/>
</dbReference>
<dbReference type="GO" id="GO:0005637">
    <property type="term" value="C:nuclear inner membrane"/>
    <property type="evidence" value="ECO:0000314"/>
    <property type="project" value="UniProtKB"/>
</dbReference>
<dbReference type="GO" id="GO:0005640">
    <property type="term" value="C:nuclear outer membrane"/>
    <property type="evidence" value="ECO:0000314"/>
    <property type="project" value="UniProtKB"/>
</dbReference>
<dbReference type="GO" id="GO:0019899">
    <property type="term" value="F:enzyme binding"/>
    <property type="evidence" value="ECO:0000353"/>
    <property type="project" value="UniProtKB"/>
</dbReference>
<dbReference type="GO" id="GO:0020037">
    <property type="term" value="F:heme binding"/>
    <property type="evidence" value="ECO:0000250"/>
    <property type="project" value="UniProtKB"/>
</dbReference>
<dbReference type="GO" id="GO:0046872">
    <property type="term" value="F:metal ion binding"/>
    <property type="evidence" value="ECO:0007669"/>
    <property type="project" value="UniProtKB-KW"/>
</dbReference>
<dbReference type="GO" id="GO:0016701">
    <property type="term" value="F:oxidoreductase activity, acting on single donors with incorporation of molecular oxygen"/>
    <property type="evidence" value="ECO:0000269"/>
    <property type="project" value="Reactome"/>
</dbReference>
<dbReference type="GO" id="GO:0016702">
    <property type="term" value="F:oxidoreductase activity, acting on single donors with incorporation of molecular oxygen, incorporation of two atoms of oxygen"/>
    <property type="evidence" value="ECO:0000318"/>
    <property type="project" value="GO_Central"/>
</dbReference>
<dbReference type="GO" id="GO:0004601">
    <property type="term" value="F:peroxidase activity"/>
    <property type="evidence" value="ECO:0000303"/>
    <property type="project" value="UniProtKB"/>
</dbReference>
<dbReference type="GO" id="GO:0004666">
    <property type="term" value="F:prostaglandin-endoperoxide synthase activity"/>
    <property type="evidence" value="ECO:0000314"/>
    <property type="project" value="UniProtKB"/>
</dbReference>
<dbReference type="GO" id="GO:0042803">
    <property type="term" value="F:protein homodimerization activity"/>
    <property type="evidence" value="ECO:0007669"/>
    <property type="project" value="Ensembl"/>
</dbReference>
<dbReference type="GO" id="GO:0050873">
    <property type="term" value="P:brown fat cell differentiation"/>
    <property type="evidence" value="ECO:0007669"/>
    <property type="project" value="Ensembl"/>
</dbReference>
<dbReference type="GO" id="GO:0071498">
    <property type="term" value="P:cellular response to fluid shear stress"/>
    <property type="evidence" value="ECO:0007669"/>
    <property type="project" value="Ensembl"/>
</dbReference>
<dbReference type="GO" id="GO:0071456">
    <property type="term" value="P:cellular response to hypoxia"/>
    <property type="evidence" value="ECO:0000270"/>
    <property type="project" value="UniProtKB"/>
</dbReference>
<dbReference type="GO" id="GO:0071471">
    <property type="term" value="P:cellular response to non-ionic osmotic stress"/>
    <property type="evidence" value="ECO:0007669"/>
    <property type="project" value="Ensembl"/>
</dbReference>
<dbReference type="GO" id="GO:0019371">
    <property type="term" value="P:cyclooxygenase pathway"/>
    <property type="evidence" value="ECO:0000314"/>
    <property type="project" value="UniProtKB"/>
</dbReference>
<dbReference type="GO" id="GO:0046697">
    <property type="term" value="P:decidualization"/>
    <property type="evidence" value="ECO:0007669"/>
    <property type="project" value="Ensembl"/>
</dbReference>
<dbReference type="GO" id="GO:0007566">
    <property type="term" value="P:embryo implantation"/>
    <property type="evidence" value="ECO:0007669"/>
    <property type="project" value="Ensembl"/>
</dbReference>
<dbReference type="GO" id="GO:0019372">
    <property type="term" value="P:lipoxygenase pathway"/>
    <property type="evidence" value="ECO:0000304"/>
    <property type="project" value="Reactome"/>
</dbReference>
<dbReference type="GO" id="GO:0042759">
    <property type="term" value="P:long-chain fatty acid biosynthetic process"/>
    <property type="evidence" value="ECO:0000304"/>
    <property type="project" value="Reactome"/>
</dbReference>
<dbReference type="GO" id="GO:1902219">
    <property type="term" value="P:negative regulation of intrinsic apoptotic signaling pathway in response to osmotic stress"/>
    <property type="evidence" value="ECO:0007669"/>
    <property type="project" value="Ensembl"/>
</dbReference>
<dbReference type="GO" id="GO:0090336">
    <property type="term" value="P:positive regulation of brown fat cell differentiation"/>
    <property type="evidence" value="ECO:0000250"/>
    <property type="project" value="BHF-UCL"/>
</dbReference>
<dbReference type="GO" id="GO:0090050">
    <property type="term" value="P:positive regulation of cell migration involved in sprouting angiogenesis"/>
    <property type="evidence" value="ECO:0000250"/>
    <property type="project" value="BHF-UCL"/>
</dbReference>
<dbReference type="GO" id="GO:0031622">
    <property type="term" value="P:positive regulation of fever generation"/>
    <property type="evidence" value="ECO:0000250"/>
    <property type="project" value="BHF-UCL"/>
</dbReference>
<dbReference type="GO" id="GO:0090271">
    <property type="term" value="P:positive regulation of fibroblast growth factor production"/>
    <property type="evidence" value="ECO:0000250"/>
    <property type="project" value="BHF-UCL"/>
</dbReference>
<dbReference type="GO" id="GO:0045429">
    <property type="term" value="P:positive regulation of nitric oxide biosynthetic process"/>
    <property type="evidence" value="ECO:0000250"/>
    <property type="project" value="BHF-UCL"/>
</dbReference>
<dbReference type="GO" id="GO:0090362">
    <property type="term" value="P:positive regulation of platelet-derived growth factor production"/>
    <property type="evidence" value="ECO:0000250"/>
    <property type="project" value="BHF-UCL"/>
</dbReference>
<dbReference type="GO" id="GO:0031394">
    <property type="term" value="P:positive regulation of prostaglandin biosynthetic process"/>
    <property type="evidence" value="ECO:0000303"/>
    <property type="project" value="BHF-UCL"/>
</dbReference>
<dbReference type="GO" id="GO:0071636">
    <property type="term" value="P:positive regulation of transforming growth factor beta production"/>
    <property type="evidence" value="ECO:0000250"/>
    <property type="project" value="BHF-UCL"/>
</dbReference>
<dbReference type="GO" id="GO:0010575">
    <property type="term" value="P:positive regulation of vascular endothelial growth factor production"/>
    <property type="evidence" value="ECO:0000250"/>
    <property type="project" value="BHF-UCL"/>
</dbReference>
<dbReference type="GO" id="GO:0001516">
    <property type="term" value="P:prostaglandin biosynthetic process"/>
    <property type="evidence" value="ECO:0000314"/>
    <property type="project" value="UniProtKB"/>
</dbReference>
<dbReference type="GO" id="GO:0032310">
    <property type="term" value="P:prostaglandin secretion"/>
    <property type="evidence" value="ECO:0007669"/>
    <property type="project" value="Ensembl"/>
</dbReference>
<dbReference type="GO" id="GO:0008217">
    <property type="term" value="P:regulation of blood pressure"/>
    <property type="evidence" value="ECO:0000250"/>
    <property type="project" value="UniProtKB"/>
</dbReference>
<dbReference type="GO" id="GO:0042127">
    <property type="term" value="P:regulation of cell population proliferation"/>
    <property type="evidence" value="ECO:0007669"/>
    <property type="project" value="Ensembl"/>
</dbReference>
<dbReference type="GO" id="GO:0050727">
    <property type="term" value="P:regulation of inflammatory response"/>
    <property type="evidence" value="ECO:0000303"/>
    <property type="project" value="UniProtKB"/>
</dbReference>
<dbReference type="GO" id="GO:0150077">
    <property type="term" value="P:regulation of neuroinflammatory response"/>
    <property type="evidence" value="ECO:0000250"/>
    <property type="project" value="UniProtKB"/>
</dbReference>
<dbReference type="GO" id="GO:0009624">
    <property type="term" value="P:response to nematode"/>
    <property type="evidence" value="ECO:0007669"/>
    <property type="project" value="Ensembl"/>
</dbReference>
<dbReference type="GO" id="GO:0006979">
    <property type="term" value="P:response to oxidative stress"/>
    <property type="evidence" value="ECO:0007669"/>
    <property type="project" value="InterPro"/>
</dbReference>
<dbReference type="GO" id="GO:0010269">
    <property type="term" value="P:response to selenium ion"/>
    <property type="evidence" value="ECO:0007669"/>
    <property type="project" value="Ensembl"/>
</dbReference>
<dbReference type="CDD" id="cd00054">
    <property type="entry name" value="EGF_CA"/>
    <property type="match status" value="1"/>
</dbReference>
<dbReference type="CDD" id="cd09816">
    <property type="entry name" value="prostaglandin_endoperoxide_synthase"/>
    <property type="match status" value="1"/>
</dbReference>
<dbReference type="FunFam" id="1.10.640.10:FF:000002">
    <property type="entry name" value="Prostaglandin G/H synthase 2"/>
    <property type="match status" value="1"/>
</dbReference>
<dbReference type="FunFam" id="2.10.25.10:FF:000235">
    <property type="entry name" value="Prostaglandin G/H synthase 2"/>
    <property type="match status" value="1"/>
</dbReference>
<dbReference type="Gene3D" id="1.10.640.10">
    <property type="entry name" value="Haem peroxidase domain superfamily, animal type"/>
    <property type="match status" value="1"/>
</dbReference>
<dbReference type="Gene3D" id="2.10.25.10">
    <property type="entry name" value="Laminin"/>
    <property type="match status" value="1"/>
</dbReference>
<dbReference type="InterPro" id="IPR000742">
    <property type="entry name" value="EGF-like_dom"/>
</dbReference>
<dbReference type="InterPro" id="IPR019791">
    <property type="entry name" value="Haem_peroxidase_animal"/>
</dbReference>
<dbReference type="InterPro" id="IPR010255">
    <property type="entry name" value="Haem_peroxidase_sf"/>
</dbReference>
<dbReference type="InterPro" id="IPR037120">
    <property type="entry name" value="Haem_peroxidase_sf_animal"/>
</dbReference>
<dbReference type="InterPro" id="IPR050783">
    <property type="entry name" value="Oxylipin_biosynth_metab"/>
</dbReference>
<dbReference type="PANTHER" id="PTHR11903">
    <property type="entry name" value="PROSTAGLANDIN G/H SYNTHASE"/>
    <property type="match status" value="1"/>
</dbReference>
<dbReference type="PANTHER" id="PTHR11903:SF8">
    <property type="entry name" value="PROSTAGLANDIN G_H SYNTHASE 2"/>
    <property type="match status" value="1"/>
</dbReference>
<dbReference type="Pfam" id="PF03098">
    <property type="entry name" value="An_peroxidase"/>
    <property type="match status" value="1"/>
</dbReference>
<dbReference type="PRINTS" id="PR00457">
    <property type="entry name" value="ANPEROXIDASE"/>
</dbReference>
<dbReference type="SUPFAM" id="SSF57196">
    <property type="entry name" value="EGF/Laminin"/>
    <property type="match status" value="1"/>
</dbReference>
<dbReference type="SUPFAM" id="SSF48113">
    <property type="entry name" value="Heme-dependent peroxidases"/>
    <property type="match status" value="1"/>
</dbReference>
<dbReference type="PROSITE" id="PS50026">
    <property type="entry name" value="EGF_3"/>
    <property type="match status" value="1"/>
</dbReference>
<dbReference type="PROSITE" id="PS50292">
    <property type="entry name" value="PEROXIDASE_3"/>
    <property type="match status" value="1"/>
</dbReference>